<gene>
    <name evidence="41" type="primary">UPF1</name>
    <name type="synonym">KIAA0221</name>
    <name evidence="41" type="synonym">RENT1</name>
</gene>
<dbReference type="EC" id="3.6.4.12" evidence="4 33"/>
<dbReference type="EC" id="3.6.4.13" evidence="40"/>
<dbReference type="EMBL" id="U65533">
    <property type="protein sequence ID" value="AAC50771.1"/>
    <property type="molecule type" value="mRNA"/>
</dbReference>
<dbReference type="EMBL" id="U59323">
    <property type="protein sequence ID" value="AAC51140.1"/>
    <property type="molecule type" value="mRNA"/>
</dbReference>
<dbReference type="EMBL" id="D86988">
    <property type="protein sequence ID" value="BAA19664.2"/>
    <property type="status" value="ALT_INIT"/>
    <property type="molecule type" value="mRNA"/>
</dbReference>
<dbReference type="EMBL" id="AF074016">
    <property type="protein sequence ID" value="AAC26788.1"/>
    <property type="molecule type" value="mRNA"/>
</dbReference>
<dbReference type="EMBL" id="AC003972">
    <property type="protein sequence ID" value="AAB94785.1"/>
    <property type="molecule type" value="Genomic_DNA"/>
</dbReference>
<dbReference type="EMBL" id="BC039817">
    <property type="protein sequence ID" value="AAH39817.1"/>
    <property type="molecule type" value="mRNA"/>
</dbReference>
<dbReference type="CCDS" id="CCDS12386.1">
    <molecule id="Q92900-2"/>
</dbReference>
<dbReference type="CCDS" id="CCDS74315.1">
    <molecule id="Q92900-1"/>
</dbReference>
<dbReference type="RefSeq" id="NP_001284478.1">
    <molecule id="Q92900-1"/>
    <property type="nucleotide sequence ID" value="NM_001297549.2"/>
</dbReference>
<dbReference type="RefSeq" id="NP_002902.2">
    <molecule id="Q92900-2"/>
    <property type="nucleotide sequence ID" value="NM_002911.3"/>
</dbReference>
<dbReference type="PDB" id="2GJK">
    <property type="method" value="X-ray"/>
    <property type="resolution" value="2.60 A"/>
    <property type="chains" value="A=295-925"/>
</dbReference>
<dbReference type="PDB" id="2GK6">
    <property type="method" value="X-ray"/>
    <property type="resolution" value="2.40 A"/>
    <property type="chains" value="A/B=295-925"/>
</dbReference>
<dbReference type="PDB" id="2GK7">
    <property type="method" value="X-ray"/>
    <property type="resolution" value="2.80 A"/>
    <property type="chains" value="A=295-925"/>
</dbReference>
<dbReference type="PDB" id="2IYK">
    <property type="method" value="X-ray"/>
    <property type="resolution" value="2.95 A"/>
    <property type="chains" value="A/B=115-272"/>
</dbReference>
<dbReference type="PDB" id="2WJV">
    <property type="method" value="X-ray"/>
    <property type="resolution" value="2.85 A"/>
    <property type="chains" value="A/B=115-925"/>
</dbReference>
<dbReference type="PDB" id="2WJY">
    <property type="method" value="X-ray"/>
    <property type="resolution" value="2.50 A"/>
    <property type="chains" value="A=115-925"/>
</dbReference>
<dbReference type="PDB" id="2XZO">
    <property type="method" value="X-ray"/>
    <property type="resolution" value="2.40 A"/>
    <property type="chains" value="A=295-925"/>
</dbReference>
<dbReference type="PDB" id="2XZP">
    <property type="method" value="X-ray"/>
    <property type="resolution" value="2.72 A"/>
    <property type="chains" value="A=295-925"/>
</dbReference>
<dbReference type="PDB" id="6EJ5">
    <property type="method" value="X-ray"/>
    <property type="resolution" value="3.34 A"/>
    <property type="chains" value="A=295-925"/>
</dbReference>
<dbReference type="PDB" id="6Z3R">
    <property type="method" value="EM"/>
    <property type="resolution" value="2.97 A"/>
    <property type="chains" value="E=1085-1095"/>
</dbReference>
<dbReference type="PDB" id="8RXB">
    <property type="method" value="X-ray"/>
    <property type="resolution" value="2.60 A"/>
    <property type="chains" value="A/D/E/I/L/P=115-287"/>
</dbReference>
<dbReference type="PDBsum" id="2GJK"/>
<dbReference type="PDBsum" id="2GK6"/>
<dbReference type="PDBsum" id="2GK7"/>
<dbReference type="PDBsum" id="2IYK"/>
<dbReference type="PDBsum" id="2WJV"/>
<dbReference type="PDBsum" id="2WJY"/>
<dbReference type="PDBsum" id="2XZO"/>
<dbReference type="PDBsum" id="2XZP"/>
<dbReference type="PDBsum" id="6EJ5"/>
<dbReference type="PDBsum" id="6Z3R"/>
<dbReference type="PDBsum" id="8RXB"/>
<dbReference type="EMDB" id="EMD-11063"/>
<dbReference type="EMDB" id="EMD-19450"/>
<dbReference type="EMDB" id="EMD-19451"/>
<dbReference type="EMDB" id="EMD-2664"/>
<dbReference type="EMDB" id="EMD-2666"/>
<dbReference type="EMDB" id="EMD-3065"/>
<dbReference type="EMDB" id="EMD-3066"/>
<dbReference type="SMR" id="Q92900"/>
<dbReference type="BioGRID" id="111908">
    <property type="interactions" value="600"/>
</dbReference>
<dbReference type="CORUM" id="Q92900"/>
<dbReference type="DIP" id="DIP-29875N"/>
<dbReference type="FunCoup" id="Q92900">
    <property type="interactions" value="4495"/>
</dbReference>
<dbReference type="IntAct" id="Q92900">
    <property type="interactions" value="288"/>
</dbReference>
<dbReference type="MINT" id="Q92900"/>
<dbReference type="STRING" id="9606.ENSP00000470142"/>
<dbReference type="GlyCosmos" id="Q92900">
    <property type="glycosylation" value="1 site, 1 glycan"/>
</dbReference>
<dbReference type="GlyGen" id="Q92900">
    <property type="glycosylation" value="1 site, 1 O-linked glycan (1 site)"/>
</dbReference>
<dbReference type="iPTMnet" id="Q92900"/>
<dbReference type="MetOSite" id="Q92900"/>
<dbReference type="PhosphoSitePlus" id="Q92900"/>
<dbReference type="SwissPalm" id="Q92900"/>
<dbReference type="BioMuta" id="UPF1"/>
<dbReference type="DMDM" id="17380291"/>
<dbReference type="jPOST" id="Q92900"/>
<dbReference type="MassIVE" id="Q92900"/>
<dbReference type="PaxDb" id="9606-ENSP00000470142"/>
<dbReference type="PeptideAtlas" id="Q92900"/>
<dbReference type="ProteomicsDB" id="75581">
    <molecule id="Q92900-1"/>
</dbReference>
<dbReference type="ProteomicsDB" id="75582">
    <molecule id="Q92900-2"/>
</dbReference>
<dbReference type="Pumba" id="Q92900"/>
<dbReference type="Antibodypedia" id="15175">
    <property type="antibodies" value="348 antibodies from 37 providers"/>
</dbReference>
<dbReference type="DNASU" id="5976"/>
<dbReference type="Ensembl" id="ENST00000262803.10">
    <molecule id="Q92900-2"/>
    <property type="protein sequence ID" value="ENSP00000262803.5"/>
    <property type="gene ID" value="ENSG00000005007.14"/>
</dbReference>
<dbReference type="Ensembl" id="ENST00000599848.5">
    <molecule id="Q92900-1"/>
    <property type="protein sequence ID" value="ENSP00000470142.1"/>
    <property type="gene ID" value="ENSG00000005007.14"/>
</dbReference>
<dbReference type="GeneID" id="5976"/>
<dbReference type="KEGG" id="hsa:5976"/>
<dbReference type="MANE-Select" id="ENST00000262803.10">
    <molecule id="Q92900-2"/>
    <property type="protein sequence ID" value="ENSP00000262803.5"/>
    <property type="RefSeq nucleotide sequence ID" value="NM_002911.4"/>
    <property type="RefSeq protein sequence ID" value="NP_002902.2"/>
</dbReference>
<dbReference type="UCSC" id="uc002nkf.4">
    <molecule id="Q92900-1"/>
    <property type="organism name" value="human"/>
</dbReference>
<dbReference type="AGR" id="HGNC:9962"/>
<dbReference type="CTD" id="5976"/>
<dbReference type="DisGeNET" id="5976"/>
<dbReference type="GeneCards" id="UPF1"/>
<dbReference type="HGNC" id="HGNC:9962">
    <property type="gene designation" value="UPF1"/>
</dbReference>
<dbReference type="HPA" id="ENSG00000005007">
    <property type="expression patterns" value="Low tissue specificity"/>
</dbReference>
<dbReference type="MalaCards" id="UPF1"/>
<dbReference type="MIM" id="601430">
    <property type="type" value="gene"/>
</dbReference>
<dbReference type="neXtProt" id="NX_Q92900"/>
<dbReference type="OpenTargets" id="ENSG00000005007"/>
<dbReference type="PharmGKB" id="PA34328"/>
<dbReference type="VEuPathDB" id="HostDB:ENSG00000005007"/>
<dbReference type="eggNOG" id="KOG1802">
    <property type="taxonomic scope" value="Eukaryota"/>
</dbReference>
<dbReference type="GeneTree" id="ENSGT00940000157413"/>
<dbReference type="HOGENOM" id="CLU_001666_4_3_1"/>
<dbReference type="InParanoid" id="Q92900"/>
<dbReference type="OMA" id="QYMQMNG"/>
<dbReference type="OrthoDB" id="6513042at2759"/>
<dbReference type="PAN-GO" id="Q92900">
    <property type="GO annotations" value="4 GO annotations based on evolutionary models"/>
</dbReference>
<dbReference type="PhylomeDB" id="Q92900"/>
<dbReference type="TreeFam" id="TF300554"/>
<dbReference type="BRENDA" id="3.6.4.13">
    <property type="organism ID" value="2681"/>
</dbReference>
<dbReference type="PathwayCommons" id="Q92900"/>
<dbReference type="Reactome" id="R-HSA-975956">
    <property type="pathway name" value="Nonsense Mediated Decay (NMD) independent of the Exon Junction Complex (EJC)"/>
</dbReference>
<dbReference type="Reactome" id="R-HSA-975957">
    <property type="pathway name" value="Nonsense Mediated Decay (NMD) enhanced by the Exon Junction Complex (EJC)"/>
</dbReference>
<dbReference type="SignaLink" id="Q92900"/>
<dbReference type="SIGNOR" id="Q92900"/>
<dbReference type="BioGRID-ORCS" id="5976">
    <property type="hits" value="794 hits in 1183 CRISPR screens"/>
</dbReference>
<dbReference type="CD-CODE" id="232F8A39">
    <property type="entry name" value="P-body"/>
</dbReference>
<dbReference type="CD-CODE" id="DEE660B4">
    <property type="entry name" value="Stress granule"/>
</dbReference>
<dbReference type="CD-CODE" id="FB4E32DD">
    <property type="entry name" value="Presynaptic clusters and postsynaptic densities"/>
</dbReference>
<dbReference type="ChiTaRS" id="UPF1">
    <property type="organism name" value="human"/>
</dbReference>
<dbReference type="EvolutionaryTrace" id="Q92900"/>
<dbReference type="GeneWiki" id="UPF1"/>
<dbReference type="GenomeRNAi" id="5976"/>
<dbReference type="Pharos" id="Q92900">
    <property type="development level" value="Tbio"/>
</dbReference>
<dbReference type="PRO" id="PR:Q92900"/>
<dbReference type="Proteomes" id="UP000005640">
    <property type="component" value="Chromosome 19"/>
</dbReference>
<dbReference type="RNAct" id="Q92900">
    <property type="molecule type" value="protein"/>
</dbReference>
<dbReference type="Bgee" id="ENSG00000005007">
    <property type="expression patterns" value="Expressed in right hemisphere of cerebellum and 179 other cell types or tissues"/>
</dbReference>
<dbReference type="ExpressionAtlas" id="Q92900">
    <property type="expression patterns" value="baseline and differential"/>
</dbReference>
<dbReference type="GO" id="GO:0000785">
    <property type="term" value="C:chromatin"/>
    <property type="evidence" value="ECO:0000314"/>
    <property type="project" value="HGNC-UCL"/>
</dbReference>
<dbReference type="GO" id="GO:0000781">
    <property type="term" value="C:chromosome, telomeric region"/>
    <property type="evidence" value="ECO:0000314"/>
    <property type="project" value="BHF-UCL"/>
</dbReference>
<dbReference type="GO" id="GO:0005737">
    <property type="term" value="C:cytoplasm"/>
    <property type="evidence" value="ECO:0000318"/>
    <property type="project" value="GO_Central"/>
</dbReference>
<dbReference type="GO" id="GO:0005829">
    <property type="term" value="C:cytosol"/>
    <property type="evidence" value="ECO:0000314"/>
    <property type="project" value="HPA"/>
</dbReference>
<dbReference type="GO" id="GO:0035145">
    <property type="term" value="C:exon-exon junction complex"/>
    <property type="evidence" value="ECO:0000314"/>
    <property type="project" value="UniProtKB"/>
</dbReference>
<dbReference type="GO" id="GO:0005654">
    <property type="term" value="C:nucleoplasm"/>
    <property type="evidence" value="ECO:0000314"/>
    <property type="project" value="HPA"/>
</dbReference>
<dbReference type="GO" id="GO:0005634">
    <property type="term" value="C:nucleus"/>
    <property type="evidence" value="ECO:0000314"/>
    <property type="project" value="UniProtKB"/>
</dbReference>
<dbReference type="GO" id="GO:0000932">
    <property type="term" value="C:P-body"/>
    <property type="evidence" value="ECO:0007669"/>
    <property type="project" value="UniProtKB-SubCell"/>
</dbReference>
<dbReference type="GO" id="GO:0048471">
    <property type="term" value="C:perinuclear region of cytoplasm"/>
    <property type="evidence" value="ECO:0007669"/>
    <property type="project" value="UniProtKB-SubCell"/>
</dbReference>
<dbReference type="GO" id="GO:0044530">
    <property type="term" value="C:supraspliceosomal complex"/>
    <property type="evidence" value="ECO:0000314"/>
    <property type="project" value="UniProtKB"/>
</dbReference>
<dbReference type="GO" id="GO:0005524">
    <property type="term" value="F:ATP binding"/>
    <property type="evidence" value="ECO:0007669"/>
    <property type="project" value="UniProtKB-KW"/>
</dbReference>
<dbReference type="GO" id="GO:0016887">
    <property type="term" value="F:ATP hydrolysis activity"/>
    <property type="evidence" value="ECO:0000314"/>
    <property type="project" value="UniProtKB"/>
</dbReference>
<dbReference type="GO" id="GO:0003682">
    <property type="term" value="F:chromatin binding"/>
    <property type="evidence" value="ECO:0000314"/>
    <property type="project" value="HGNC-UCL"/>
</dbReference>
<dbReference type="GO" id="GO:0036121">
    <property type="term" value="F:double-stranded DNA helicase activity"/>
    <property type="evidence" value="ECO:0000314"/>
    <property type="project" value="UniProtKB"/>
</dbReference>
<dbReference type="GO" id="GO:0004386">
    <property type="term" value="F:helicase activity"/>
    <property type="evidence" value="ECO:0000303"/>
    <property type="project" value="UniProtKB"/>
</dbReference>
<dbReference type="GO" id="GO:0044877">
    <property type="term" value="F:protein-containing complex binding"/>
    <property type="evidence" value="ECO:0000353"/>
    <property type="project" value="UniProtKB"/>
</dbReference>
<dbReference type="GO" id="GO:0003723">
    <property type="term" value="F:RNA binding"/>
    <property type="evidence" value="ECO:0000314"/>
    <property type="project" value="UniProtKB"/>
</dbReference>
<dbReference type="GO" id="GO:0003724">
    <property type="term" value="F:RNA helicase activity"/>
    <property type="evidence" value="ECO:0000314"/>
    <property type="project" value="UniProtKB"/>
</dbReference>
<dbReference type="GO" id="GO:0042162">
    <property type="term" value="F:telomeric DNA binding"/>
    <property type="evidence" value="ECO:0000314"/>
    <property type="project" value="BHF-UCL"/>
</dbReference>
<dbReference type="GO" id="GO:0008270">
    <property type="term" value="F:zinc ion binding"/>
    <property type="evidence" value="ECO:0007669"/>
    <property type="project" value="UniProtKB-KW"/>
</dbReference>
<dbReference type="GO" id="GO:0061158">
    <property type="term" value="P:3'-UTR-mediated mRNA destabilization"/>
    <property type="evidence" value="ECO:0000314"/>
    <property type="project" value="UniProtKB"/>
</dbReference>
<dbReference type="GO" id="GO:0044770">
    <property type="term" value="P:cell cycle phase transition"/>
    <property type="evidence" value="ECO:0000315"/>
    <property type="project" value="UniProtKB"/>
</dbReference>
<dbReference type="GO" id="GO:0071347">
    <property type="term" value="P:cellular response to interleukin-1"/>
    <property type="evidence" value="ECO:0000304"/>
    <property type="project" value="UniProtKB"/>
</dbReference>
<dbReference type="GO" id="GO:0071222">
    <property type="term" value="P:cellular response to lipopolysaccharide"/>
    <property type="evidence" value="ECO:0000304"/>
    <property type="project" value="UniProtKB"/>
</dbReference>
<dbReference type="GO" id="GO:0006281">
    <property type="term" value="P:DNA repair"/>
    <property type="evidence" value="ECO:0000314"/>
    <property type="project" value="HGNC-UCL"/>
</dbReference>
<dbReference type="GO" id="GO:0006260">
    <property type="term" value="P:DNA replication"/>
    <property type="evidence" value="ECO:0000315"/>
    <property type="project" value="HGNC-UCL"/>
</dbReference>
<dbReference type="GO" id="GO:0071044">
    <property type="term" value="P:histone mRNA catabolic process"/>
    <property type="evidence" value="ECO:0000315"/>
    <property type="project" value="UniProtKB"/>
</dbReference>
<dbReference type="GO" id="GO:0006406">
    <property type="term" value="P:mRNA export from nucleus"/>
    <property type="evidence" value="ECO:0000304"/>
    <property type="project" value="HGNC-UCL"/>
</dbReference>
<dbReference type="GO" id="GO:0000956">
    <property type="term" value="P:nuclear-transcribed mRNA catabolic process"/>
    <property type="evidence" value="ECO:0000315"/>
    <property type="project" value="UniProtKB"/>
</dbReference>
<dbReference type="GO" id="GO:0000184">
    <property type="term" value="P:nuclear-transcribed mRNA catabolic process, nonsense-mediated decay"/>
    <property type="evidence" value="ECO:0000314"/>
    <property type="project" value="UniProtKB"/>
</dbReference>
<dbReference type="GO" id="GO:0061014">
    <property type="term" value="P:positive regulation of mRNA catabolic process"/>
    <property type="evidence" value="ECO:0000314"/>
    <property type="project" value="UniProtKB"/>
</dbReference>
<dbReference type="GO" id="GO:1905746">
    <property type="term" value="P:positive regulation of mRNA cis splicing, via spliceosome"/>
    <property type="evidence" value="ECO:0007669"/>
    <property type="project" value="Ensembl"/>
</dbReference>
<dbReference type="GO" id="GO:0032204">
    <property type="term" value="P:regulation of telomere maintenance"/>
    <property type="evidence" value="ECO:0000315"/>
    <property type="project" value="BHF-UCL"/>
</dbReference>
<dbReference type="GO" id="GO:0006449">
    <property type="term" value="P:regulation of translational termination"/>
    <property type="evidence" value="ECO:0000315"/>
    <property type="project" value="UniProtKB"/>
</dbReference>
<dbReference type="GO" id="GO:0032201">
    <property type="term" value="P:telomere maintenance via semi-conservative replication"/>
    <property type="evidence" value="ECO:0000314"/>
    <property type="project" value="BHF-UCL"/>
</dbReference>
<dbReference type="CDD" id="cd21407">
    <property type="entry name" value="1B_UPF1-like"/>
    <property type="match status" value="1"/>
</dbReference>
<dbReference type="CDD" id="cd18039">
    <property type="entry name" value="DEXXQc_UPF1"/>
    <property type="match status" value="1"/>
</dbReference>
<dbReference type="CDD" id="cd18808">
    <property type="entry name" value="SF1_C_Upf1"/>
    <property type="match status" value="1"/>
</dbReference>
<dbReference type="CDD" id="cd21400">
    <property type="entry name" value="ZBD_UPF1-like"/>
    <property type="match status" value="1"/>
</dbReference>
<dbReference type="FunFam" id="2.40.30.230:FF:000001">
    <property type="entry name" value="Regulator of nonsense transcripts 1"/>
    <property type="match status" value="1"/>
</dbReference>
<dbReference type="FunFam" id="3.40.50.300:FF:000097">
    <property type="entry name" value="Regulator of nonsense transcripts 1"/>
    <property type="match status" value="1"/>
</dbReference>
<dbReference type="Gene3D" id="2.40.30.230">
    <property type="match status" value="1"/>
</dbReference>
<dbReference type="Gene3D" id="6.10.140.1240">
    <property type="match status" value="1"/>
</dbReference>
<dbReference type="Gene3D" id="3.40.50.300">
    <property type="entry name" value="P-loop containing nucleotide triphosphate hydrolases"/>
    <property type="match status" value="2"/>
</dbReference>
<dbReference type="IDEAL" id="IID00325"/>
<dbReference type="InterPro" id="IPR045055">
    <property type="entry name" value="DNA2/NAM7-like"/>
</dbReference>
<dbReference type="InterPro" id="IPR041679">
    <property type="entry name" value="DNA2/NAM7-like_C"/>
</dbReference>
<dbReference type="InterPro" id="IPR041677">
    <property type="entry name" value="DNA2/NAM7_AAA_11"/>
</dbReference>
<dbReference type="InterPro" id="IPR006935">
    <property type="entry name" value="Helicase/UvrB_N"/>
</dbReference>
<dbReference type="InterPro" id="IPR027417">
    <property type="entry name" value="P-loop_NTPase"/>
</dbReference>
<dbReference type="InterPro" id="IPR047187">
    <property type="entry name" value="SF1_C_Upf1"/>
</dbReference>
<dbReference type="InterPro" id="IPR040812">
    <property type="entry name" value="UPF1_1B_dom"/>
</dbReference>
<dbReference type="InterPro" id="IPR018999">
    <property type="entry name" value="UPF1_CH/ZBD"/>
</dbReference>
<dbReference type="PANTHER" id="PTHR10887">
    <property type="entry name" value="DNA2/NAM7 HELICASE FAMILY"/>
    <property type="match status" value="1"/>
</dbReference>
<dbReference type="PANTHER" id="PTHR10887:SF364">
    <property type="entry name" value="REGULATOR OF NONSENSE TRANSCRIPTS 1"/>
    <property type="match status" value="1"/>
</dbReference>
<dbReference type="Pfam" id="PF13086">
    <property type="entry name" value="AAA_11"/>
    <property type="match status" value="1"/>
</dbReference>
<dbReference type="Pfam" id="PF13087">
    <property type="entry name" value="AAA_12"/>
    <property type="match status" value="1"/>
</dbReference>
<dbReference type="Pfam" id="PF04851">
    <property type="entry name" value="ResIII"/>
    <property type="match status" value="1"/>
</dbReference>
<dbReference type="Pfam" id="PF18141">
    <property type="entry name" value="UPF1_1B_dom"/>
    <property type="match status" value="1"/>
</dbReference>
<dbReference type="Pfam" id="PF09416">
    <property type="entry name" value="UPF1_Zn_bind"/>
    <property type="match status" value="1"/>
</dbReference>
<dbReference type="SUPFAM" id="SSF52540">
    <property type="entry name" value="P-loop containing nucleoside triphosphate hydrolases"/>
    <property type="match status" value="1"/>
</dbReference>
<dbReference type="PROSITE" id="PS51997">
    <property type="entry name" value="UPF1_CH_RICH"/>
    <property type="match status" value="1"/>
</dbReference>
<accession>Q92900</accession>
<accession>O00239</accession>
<accession>O43343</accession>
<accession>Q86Z25</accession>
<accession>Q92842</accession>
<sequence length="1129" mass="124345">MSVEAYGPSSQTLTFLDTEEAELLGADTQGSEFEFTDFTLPSQTQTPPGGPGGPGGGGAGGPGGAGAGAAAGQLDAQVGPEGILQNGAVDDSVAKTSQLLAELNFEEDEEDTYYTKDLPIHACSYCGIHDPACVVYCNTSKKWFCNGRGNTSGSHIVNHLVRAKCKEVTLHKDGPLGETVLECYNCGCRNVFLLGFIPAKADSVVVLLCRQPCASQSSLKDINWDSSQWQPLIQDRCFLSWLVKIPSEQEQLRARQITAQQINKLEELWKENPSATLEDLEKPGVDEEPQHVLLRYEDAYQYQNIFGPLVKLEADYDKKLKESQTQDNITVRWDLGLNKKRIAYFTLPKTDSGNEDLVIIWLRDMRLMQGDEICLRYKGDLAPLWKGIGHVIKVPDNYGDEIAIELRSSVGAPVEVTHNFQVDFVWKSTSFDRMQSALKTFAVDETSVSGYIYHKLLGHEVEDVIIKCQLPKRFTAQGLPDLNHSQVYAVKTVLQRPLSLIQGPPGTGKTVTSATIVYHLARQGNGPVLVCAPSNIAVDQLTEKIHQTGLKVVRLCAKSREAIDSPVSFLALHNQIRNMDSMPELQKLQQLKDETGELSSADEKRYRALKRTAERELLMNADVICCTCVGAGDPRLAKMQFRSILIDESTQATEPECMVPVVLGAKQLILVGDHCQLGPVVMCKKAAKAGLSQSLFERLVVLGIRPIRLQVQYRMHPALSAFPSNIFYEGSLQNGVTAADRVKKGFDFQWPQPDKPMFFYVTQGQEEIASSGTSYLNRTEAANVEKITTKLLKAGAKPDQIGIITPYEGQRSYLVQYMQFSGSLHTKLYQEVEIASVDAFQGREKDFIILSCVRANEHQGIGFLNDPRRLNVALTRARYGVIIVGNPKALSKQPLWNHLLNYYKEQKVLVEGPLNNLRESLMQFSKPRKLVNTINPGARFMTTAMYDAREAIIPGSVYDRSSQGRPSSMYFQTHDQIGMISAGPSHVAAMNIPIPFNLVMPPMPPPGYFGQANGPAAGRGTPKGKTGRGGRQKNRFGLPGPSQTNLPNSQASQDVASQPFSQGALTQGYISMSQPSQMSQPGLSQPELSQDSYLGDEFKSQIDVALSQDSTYQGERAYQHGGVTGLSQY</sequence>
<feature type="chain" id="PRO_0000080716" description="Regulator of nonsense transcripts 1">
    <location>
        <begin position="1"/>
        <end position="1129"/>
    </location>
</feature>
<feature type="domain" description="Upf1 CH-rich" evidence="2">
    <location>
        <begin position="115"/>
        <end position="272"/>
    </location>
</feature>
<feature type="region of interest" description="Sufficient for interaction with RENT2">
    <location>
        <begin position="1"/>
        <end position="415"/>
    </location>
</feature>
<feature type="region of interest" description="Disordered" evidence="3">
    <location>
        <begin position="39"/>
        <end position="70"/>
    </location>
</feature>
<feature type="region of interest" description="C3H" evidence="2">
    <location>
        <begin position="123"/>
        <end position="155"/>
    </location>
</feature>
<feature type="region of interest" description="CC/SHH/C" evidence="2">
    <location>
        <begin position="137"/>
        <end position="165"/>
    </location>
</feature>
<feature type="region of interest" description="C4" evidence="2">
    <location>
        <begin position="183"/>
        <end position="213"/>
    </location>
</feature>
<feature type="region of interest" description="Disordered" evidence="3">
    <location>
        <begin position="1009"/>
        <end position="1058"/>
    </location>
</feature>
<feature type="region of interest" description="Disordered" evidence="3">
    <location>
        <begin position="1073"/>
        <end position="1096"/>
    </location>
</feature>
<feature type="region of interest" description="Disordered" evidence="3">
    <location>
        <begin position="1110"/>
        <end position="1129"/>
    </location>
</feature>
<feature type="short sequence motif" description="[ST]-Q motif 1">
    <location>
        <begin position="1089"/>
        <end position="1090"/>
    </location>
</feature>
<feature type="short sequence motif" description="[ST]-Q motif 2">
    <location>
        <begin position="1107"/>
        <end position="1108"/>
    </location>
</feature>
<feature type="compositionally biased region" description="Gly residues" evidence="3">
    <location>
        <begin position="52"/>
        <end position="69"/>
    </location>
</feature>
<feature type="compositionally biased region" description="Basic residues" evidence="3">
    <location>
        <begin position="1025"/>
        <end position="1034"/>
    </location>
</feature>
<feature type="compositionally biased region" description="Polar residues" evidence="3">
    <location>
        <begin position="1041"/>
        <end position="1058"/>
    </location>
</feature>
<feature type="compositionally biased region" description="Low complexity" evidence="3">
    <location>
        <begin position="1073"/>
        <end position="1086"/>
    </location>
</feature>
<feature type="binding site" evidence="2">
    <location>
        <position position="123"/>
    </location>
    <ligand>
        <name>Zn(2+)</name>
        <dbReference type="ChEBI" id="CHEBI:29105"/>
        <label>1</label>
    </ligand>
</feature>
<feature type="binding site" evidence="2">
    <location>
        <position position="126"/>
    </location>
    <ligand>
        <name>Zn(2+)</name>
        <dbReference type="ChEBI" id="CHEBI:29105"/>
        <label>1</label>
    </ligand>
</feature>
<feature type="binding site" evidence="2">
    <location>
        <position position="137"/>
    </location>
    <ligand>
        <name>Zn(2+)</name>
        <dbReference type="ChEBI" id="CHEBI:29105"/>
        <label>2</label>
    </ligand>
</feature>
<feature type="binding site" evidence="2">
    <location>
        <position position="140"/>
    </location>
    <ligand>
        <name>Zn(2+)</name>
        <dbReference type="ChEBI" id="CHEBI:29105"/>
        <label>2</label>
    </ligand>
</feature>
<feature type="binding site" evidence="2">
    <location>
        <position position="145"/>
    </location>
    <ligand>
        <name>Zn(2+)</name>
        <dbReference type="ChEBI" id="CHEBI:29105"/>
        <label>1</label>
    </ligand>
</feature>
<feature type="binding site" evidence="2">
    <location>
        <position position="155"/>
    </location>
    <ligand>
        <name>Zn(2+)</name>
        <dbReference type="ChEBI" id="CHEBI:29105"/>
        <label>1</label>
    </ligand>
</feature>
<feature type="binding site" evidence="2">
    <location>
        <position position="159"/>
    </location>
    <ligand>
        <name>Zn(2+)</name>
        <dbReference type="ChEBI" id="CHEBI:29105"/>
        <label>2</label>
    </ligand>
</feature>
<feature type="binding site" evidence="2">
    <location>
        <position position="165"/>
    </location>
    <ligand>
        <name>Zn(2+)</name>
        <dbReference type="ChEBI" id="CHEBI:29105"/>
        <label>2</label>
    </ligand>
</feature>
<feature type="binding site" evidence="2">
    <location>
        <position position="183"/>
    </location>
    <ligand>
        <name>Zn(2+)</name>
        <dbReference type="ChEBI" id="CHEBI:29105"/>
        <label>3</label>
    </ligand>
</feature>
<feature type="binding site" evidence="2">
    <location>
        <position position="186"/>
    </location>
    <ligand>
        <name>Zn(2+)</name>
        <dbReference type="ChEBI" id="CHEBI:29105"/>
        <label>3</label>
    </ligand>
</feature>
<feature type="binding site" evidence="2">
    <location>
        <position position="209"/>
    </location>
    <ligand>
        <name>Zn(2+)</name>
        <dbReference type="ChEBI" id="CHEBI:29105"/>
        <label>3</label>
    </ligand>
</feature>
<feature type="binding site" evidence="2">
    <location>
        <position position="213"/>
    </location>
    <ligand>
        <name>Zn(2+)</name>
        <dbReference type="ChEBI" id="CHEBI:29105"/>
        <label>3</label>
    </ligand>
</feature>
<feature type="binding site" evidence="26">
    <location>
        <position position="486"/>
    </location>
    <ligand>
        <name>ATP</name>
        <dbReference type="ChEBI" id="CHEBI:30616"/>
    </ligand>
</feature>
<feature type="binding site" evidence="42">
    <location>
        <begin position="506"/>
        <end position="510"/>
    </location>
    <ligand>
        <name>ATP</name>
        <dbReference type="ChEBI" id="CHEBI:30616"/>
    </ligand>
</feature>
<feature type="binding site" evidence="26">
    <location>
        <position position="676"/>
    </location>
    <ligand>
        <name>ATP</name>
        <dbReference type="ChEBI" id="CHEBI:30616"/>
    </ligand>
</feature>
<feature type="binding site" evidence="26">
    <location>
        <position position="713"/>
    </location>
    <ligand>
        <name>ATP</name>
        <dbReference type="ChEBI" id="CHEBI:30616"/>
    </ligand>
</feature>
<feature type="binding site" evidence="26">
    <location>
        <position position="844"/>
    </location>
    <ligand>
        <name>ATP</name>
        <dbReference type="ChEBI" id="CHEBI:30616"/>
    </ligand>
</feature>
<feature type="modified residue" description="Phosphoserine" evidence="50">
    <location>
        <position position="10"/>
    </location>
</feature>
<feature type="modified residue" description="Phosphoserine" evidence="50">
    <location>
        <position position="31"/>
    </location>
</feature>
<feature type="modified residue" description="Phosphoserine" evidence="48">
    <location>
        <position position="565"/>
    </location>
</feature>
<feature type="modified residue" description="Phosphoserine" evidence="48">
    <location>
        <position position="956"/>
    </location>
</feature>
<feature type="modified residue" description="Omega-N-methylarginine" evidence="49">
    <location>
        <position position="1019"/>
    </location>
</feature>
<feature type="modified residue" description="Phosphoserine" evidence="9 15">
    <location>
        <position position="1089"/>
    </location>
</feature>
<feature type="modified residue" description="Phosphoserine" evidence="9 15 43 44 45 46 47 48">
    <location>
        <position position="1107"/>
    </location>
</feature>
<feature type="modified residue" description="Phosphoserine" evidence="46 47">
    <location>
        <position position="1110"/>
    </location>
</feature>
<feature type="modified residue" description="Phosphoserine" evidence="46">
    <location>
        <position position="1127"/>
    </location>
</feature>
<feature type="splice variant" id="VSP_003393" description="In isoform 2." evidence="35 36 37 38">
    <location>
        <begin position="353"/>
        <end position="363"/>
    </location>
</feature>
<feature type="sequence variant" id="VAR_056207" description="In dbSNP:rs17339451." evidence="34">
    <original>A</original>
    <variation>S</variation>
    <location>
        <position position="69"/>
    </location>
</feature>
<feature type="mutagenesis site" description="Abolishes ability to interact with UPF2/RENT2 and copurifies with greater amounts of SMG1, SMG8 and SMG9. Increases interaction with DHX34. No effect on interaction with SMG1-DHX34-UPF1 complex." evidence="15 22 28 30">
    <original>C</original>
    <variation>S</variation>
    <location>
        <position position="126"/>
    </location>
</feature>
<feature type="mutagenesis site" description="Abolishes interaction with UPF2. Decreases interaction with DHX34." evidence="28">
    <original>LECY</original>
    <variation>VRVD</variation>
    <location>
        <begin position="181"/>
        <end position="184"/>
    </location>
</feature>
<feature type="mutagenesis site" description="Abolishes interaction with UPF2. No effect on interaction with DHX34." evidence="28">
    <original>VV</original>
    <variation>DI</variation>
    <location>
        <begin position="204"/>
        <end position="205"/>
    </location>
</feature>
<feature type="mutagenesis site" description="Prevents dephosphorylation and targets the protein to the P-body." evidence="21">
    <original>GTG</original>
    <variation>RTE</variation>
    <location>
        <begin position="506"/>
        <end position="508"/>
    </location>
</feature>
<feature type="mutagenesis site" description="Decreases interaction with DHX34; when associated with E-508." evidence="28">
    <original>G</original>
    <variation>R</variation>
    <location>
        <position position="506"/>
    </location>
</feature>
<feature type="mutagenesis site" description="Decreases interaction with DHX34; when associated with R-506." evidence="28">
    <original>G</original>
    <variation>E</variation>
    <location>
        <position position="508"/>
    </location>
</feature>
<feature type="mutagenesis site" description="Inhibits histone mRNA degradation, ATPase activity and ATP binding. No effect on interaction with DHX34." evidence="14 15 16 28">
    <original>K</original>
    <variation>A</variation>
    <location>
        <position position="509"/>
    </location>
</feature>
<feature type="mutagenesis site" description="Impairs RNA binding.">
    <original>KR</original>
    <variation>AA</variation>
    <location>
        <begin position="610"/>
        <end position="611"/>
    </location>
</feature>
<feature type="mutagenesis site" description="Impairs RNA binding." evidence="16">
    <original>R</original>
    <variation>A</variation>
    <location>
        <position position="615"/>
    </location>
</feature>
<feature type="mutagenesis site" description="Loss of ATPase activity and helicase activity." evidence="4 16">
    <original>DE</original>
    <variation>AA</variation>
    <location>
        <begin position="647"/>
        <end position="648"/>
    </location>
</feature>
<feature type="mutagenesis site" description="Loss of ATPase activity and helicase activity. Inhibits ZC3H12A-mediated IL6 mRNA degradation." evidence="4 16 29">
    <original>DE</original>
    <variation>AA</variation>
    <location>
        <begin position="647"/>
        <end position="648"/>
    </location>
</feature>
<feature type="mutagenesis site" description="Impairs ATPase activity, no effect on ATP binding." evidence="16">
    <original>Q</original>
    <variation>A</variation>
    <location>
        <position position="676"/>
    </location>
</feature>
<feature type="mutagenesis site" description="Impairs ATPase activity and ATP binding." evidence="16">
    <original>R</original>
    <variation>A</variation>
    <location>
        <position position="714"/>
    </location>
</feature>
<feature type="mutagenesis site" description="Inhibits histone mRNA degradation." evidence="7 14">
    <original>R</original>
    <variation>A</variation>
    <location>
        <position position="843"/>
    </location>
</feature>
<feature type="mutagenesis site" description="Abolishes NMD." evidence="7 14">
    <original>R</original>
    <variation>C</variation>
    <location>
        <position position="843"/>
    </location>
</feature>
<feature type="mutagenesis site" description="Impairs ATPase activity and ATP binding." evidence="16">
    <original>R</original>
    <variation>A</variation>
    <location>
        <position position="876"/>
    </location>
</feature>
<feature type="mutagenesis site" description="Impairs association with UPF2, SMG1 and SMG7 and impairs phosphorylation; when associated with A-1089, A-1107 and A-1127." evidence="15">
    <original>S</original>
    <variation>A</variation>
    <location>
        <position position="1084"/>
    </location>
</feature>
<feature type="mutagenesis site" description="Impairs association with UPF2, SMG1 and SMG7 and impairs phosphorylation; when associated with A-1084, A-1107 and A-1127." evidence="9 15">
    <original>S</original>
    <variation>A</variation>
    <location>
        <position position="1089"/>
    </location>
</feature>
<feature type="mutagenesis site" description="Still phosphorylated but with less efficiency." evidence="9 15">
    <original>S</original>
    <variation>A</variation>
    <location>
        <position position="1089"/>
    </location>
</feature>
<feature type="mutagenesis site" description="Impairs association with UPF2, SMG1 and SMG7 and impairs phosphorylation; when associated with A-1084, A-1089 and A-1127." evidence="9 15">
    <original>S</original>
    <variation>A</variation>
    <location>
        <position position="1107"/>
    </location>
</feature>
<feature type="mutagenesis site" description="Impairs phosphorylation." evidence="9 15">
    <original>S</original>
    <variation>A</variation>
    <location>
        <position position="1107"/>
    </location>
</feature>
<feature type="mutagenesis site" description="Impairs phosphorylation." evidence="9">
    <original>Q</original>
    <variation>N</variation>
    <location>
        <position position="1108"/>
    </location>
</feature>
<feature type="mutagenesis site" description="Impairs association with UPF2, SMG1 and SMG7 and impairs phosphorylation; when associated with A-1084, A-1089 and A-1107." evidence="15">
    <original>S</original>
    <variation>A</variation>
    <location>
        <position position="1127"/>
    </location>
</feature>
<feature type="sequence conflict" description="In Ref. 2; AAC51140." evidence="39" ref="2">
    <original>G</original>
    <variation>S</variation>
    <location>
        <position position="61"/>
    </location>
</feature>
<feature type="sequence conflict" description="In Ref. 2; AAC51140." evidence="39" ref="2">
    <original>I</original>
    <variation>T</variation>
    <location>
        <position position="466"/>
    </location>
</feature>
<feature type="sequence conflict" description="In Ref. 1; AAC50771." evidence="39" ref="1">
    <original>G</original>
    <variation>A</variation>
    <location>
        <position position="478"/>
    </location>
</feature>
<feature type="sequence conflict" description="In Ref. 1; AAC50771." evidence="39" ref="1">
    <original>G</original>
    <variation>D</variation>
    <location>
        <position position="524"/>
    </location>
</feature>
<feature type="sequence conflict" description="In Ref. 1; AAC50771." evidence="39" ref="1">
    <original>A</original>
    <variation>P</variation>
    <location>
        <position position="557"/>
    </location>
</feature>
<feature type="sequence conflict" description="In Ref. 1; AAC50771." evidence="39" ref="1">
    <original>NY</original>
    <variation>IF</variation>
    <location>
        <begin position="901"/>
        <end position="902"/>
    </location>
</feature>
<feature type="turn" evidence="56">
    <location>
        <begin position="124"/>
        <end position="126"/>
    </location>
</feature>
<feature type="helix" evidence="56">
    <location>
        <begin position="131"/>
        <end position="133"/>
    </location>
</feature>
<feature type="strand" evidence="56">
    <location>
        <begin position="134"/>
        <end position="137"/>
    </location>
</feature>
<feature type="turn" evidence="56">
    <location>
        <begin position="138"/>
        <end position="141"/>
    </location>
</feature>
<feature type="strand" evidence="56">
    <location>
        <begin position="142"/>
        <end position="146"/>
    </location>
</feature>
<feature type="strand" evidence="56">
    <location>
        <begin position="151"/>
        <end position="153"/>
    </location>
</feature>
<feature type="helix" evidence="56">
    <location>
        <begin position="155"/>
        <end position="163"/>
    </location>
</feature>
<feature type="strand" evidence="56">
    <location>
        <begin position="168"/>
        <end position="170"/>
    </location>
</feature>
<feature type="strand" evidence="55">
    <location>
        <begin position="174"/>
        <end position="176"/>
    </location>
</feature>
<feature type="strand" evidence="60">
    <location>
        <begin position="178"/>
        <end position="180"/>
    </location>
</feature>
<feature type="turn" evidence="56">
    <location>
        <begin position="184"/>
        <end position="186"/>
    </location>
</feature>
<feature type="turn" evidence="56">
    <location>
        <begin position="191"/>
        <end position="193"/>
    </location>
</feature>
<feature type="strand" evidence="56">
    <location>
        <begin position="195"/>
        <end position="197"/>
    </location>
</feature>
<feature type="strand" evidence="55">
    <location>
        <begin position="200"/>
        <end position="202"/>
    </location>
</feature>
<feature type="strand" evidence="60">
    <location>
        <begin position="204"/>
        <end position="209"/>
    </location>
</feature>
<feature type="turn" evidence="56">
    <location>
        <begin position="210"/>
        <end position="213"/>
    </location>
</feature>
<feature type="turn" evidence="55">
    <location>
        <begin position="216"/>
        <end position="218"/>
    </location>
</feature>
<feature type="turn" evidence="54">
    <location>
        <begin position="220"/>
        <end position="222"/>
    </location>
</feature>
<feature type="helix" evidence="55">
    <location>
        <begin position="226"/>
        <end position="228"/>
    </location>
</feature>
<feature type="strand" evidence="56">
    <location>
        <begin position="230"/>
        <end position="233"/>
    </location>
</feature>
<feature type="strand" evidence="56">
    <location>
        <begin position="235"/>
        <end position="238"/>
    </location>
</feature>
<feature type="turn" evidence="56">
    <location>
        <begin position="240"/>
        <end position="242"/>
    </location>
</feature>
<feature type="helix" evidence="56">
    <location>
        <begin position="248"/>
        <end position="253"/>
    </location>
</feature>
<feature type="helix" evidence="56">
    <location>
        <begin position="259"/>
        <end position="269"/>
    </location>
</feature>
<feature type="helix" evidence="57">
    <location>
        <begin position="299"/>
        <end position="321"/>
    </location>
</feature>
<feature type="strand" evidence="52">
    <location>
        <begin position="326"/>
        <end position="329"/>
    </location>
</feature>
<feature type="strand" evidence="57">
    <location>
        <begin position="332"/>
        <end position="335"/>
    </location>
</feature>
<feature type="turn" evidence="51">
    <location>
        <begin position="337"/>
        <end position="339"/>
    </location>
</feature>
<feature type="strand" evidence="57">
    <location>
        <begin position="341"/>
        <end position="345"/>
    </location>
</feature>
<feature type="helix" evidence="58">
    <location>
        <begin position="364"/>
        <end position="366"/>
    </location>
</feature>
<feature type="strand" evidence="57">
    <location>
        <begin position="372"/>
        <end position="377"/>
    </location>
</feature>
<feature type="strand" evidence="57">
    <location>
        <begin position="379"/>
        <end position="382"/>
    </location>
</feature>
<feature type="strand" evidence="57">
    <location>
        <begin position="385"/>
        <end position="393"/>
    </location>
</feature>
<feature type="strand" evidence="53">
    <location>
        <begin position="396"/>
        <end position="398"/>
    </location>
</feature>
<feature type="strand" evidence="57">
    <location>
        <begin position="402"/>
        <end position="407"/>
    </location>
</feature>
<feature type="strand" evidence="51">
    <location>
        <begin position="410"/>
        <end position="412"/>
    </location>
</feature>
<feature type="strand" evidence="57">
    <location>
        <begin position="418"/>
        <end position="425"/>
    </location>
</feature>
<feature type="helix" evidence="57">
    <location>
        <begin position="429"/>
        <end position="443"/>
    </location>
</feature>
<feature type="strand" evidence="59">
    <location>
        <begin position="445"/>
        <end position="448"/>
    </location>
</feature>
<feature type="helix" evidence="57">
    <location>
        <begin position="450"/>
        <end position="456"/>
    </location>
</feature>
<feature type="helix" evidence="57">
    <location>
        <begin position="484"/>
        <end position="493"/>
    </location>
</feature>
<feature type="strand" evidence="57">
    <location>
        <begin position="497"/>
        <end position="502"/>
    </location>
</feature>
<feature type="helix" evidence="57">
    <location>
        <begin position="509"/>
        <end position="522"/>
    </location>
</feature>
<feature type="strand" evidence="52">
    <location>
        <begin position="523"/>
        <end position="525"/>
    </location>
</feature>
<feature type="strand" evidence="57">
    <location>
        <begin position="528"/>
        <end position="534"/>
    </location>
</feature>
<feature type="helix" evidence="57">
    <location>
        <begin position="535"/>
        <end position="547"/>
    </location>
</feature>
<feature type="strand" evidence="57">
    <location>
        <begin position="552"/>
        <end position="554"/>
    </location>
</feature>
<feature type="helix" evidence="57">
    <location>
        <begin position="558"/>
        <end position="560"/>
    </location>
</feature>
<feature type="helix" evidence="57">
    <location>
        <begin position="568"/>
        <end position="570"/>
    </location>
</feature>
<feature type="helix" evidence="57">
    <location>
        <begin position="572"/>
        <end position="577"/>
    </location>
</feature>
<feature type="helix" evidence="57">
    <location>
        <begin position="582"/>
        <end position="591"/>
    </location>
</feature>
<feature type="turn" evidence="56">
    <location>
        <begin position="593"/>
        <end position="595"/>
    </location>
</feature>
<feature type="helix" evidence="57">
    <location>
        <begin position="600"/>
        <end position="620"/>
    </location>
</feature>
<feature type="strand" evidence="57">
    <location>
        <begin position="622"/>
        <end position="627"/>
    </location>
</feature>
<feature type="helix" evidence="57">
    <location>
        <begin position="630"/>
        <end position="632"/>
    </location>
</feature>
<feature type="helix" evidence="57">
    <location>
        <begin position="634"/>
        <end position="636"/>
    </location>
</feature>
<feature type="strand" evidence="57">
    <location>
        <begin position="642"/>
        <end position="646"/>
    </location>
</feature>
<feature type="helix" evidence="57">
    <location>
        <begin position="649"/>
        <end position="651"/>
    </location>
</feature>
<feature type="helix" evidence="57">
    <location>
        <begin position="654"/>
        <end position="661"/>
    </location>
</feature>
<feature type="turn" evidence="57">
    <location>
        <begin position="662"/>
        <end position="664"/>
    </location>
</feature>
<feature type="strand" evidence="57">
    <location>
        <begin position="665"/>
        <end position="672"/>
    </location>
</feature>
<feature type="strand" evidence="59">
    <location>
        <begin position="674"/>
        <end position="676"/>
    </location>
</feature>
<feature type="helix" evidence="57">
    <location>
        <begin position="684"/>
        <end position="688"/>
    </location>
</feature>
<feature type="turn" evidence="57">
    <location>
        <begin position="689"/>
        <end position="692"/>
    </location>
</feature>
<feature type="helix" evidence="57">
    <location>
        <begin position="695"/>
        <end position="702"/>
    </location>
</feature>
<feature type="helix" evidence="57">
    <location>
        <begin position="717"/>
        <end position="727"/>
    </location>
</feature>
<feature type="strand" evidence="57">
    <location>
        <begin position="733"/>
        <end position="736"/>
    </location>
</feature>
<feature type="helix" evidence="57">
    <location>
        <begin position="739"/>
        <end position="741"/>
    </location>
</feature>
<feature type="strand" evidence="53">
    <location>
        <begin position="751"/>
        <end position="754"/>
    </location>
</feature>
<feature type="strand" evidence="57">
    <location>
        <begin position="757"/>
        <end position="761"/>
    </location>
</feature>
<feature type="strand" evidence="51">
    <location>
        <begin position="766"/>
        <end position="768"/>
    </location>
</feature>
<feature type="strand" evidence="56">
    <location>
        <begin position="770"/>
        <end position="773"/>
    </location>
</feature>
<feature type="strand" evidence="51">
    <location>
        <begin position="775"/>
        <end position="777"/>
    </location>
</feature>
<feature type="helix" evidence="57">
    <location>
        <begin position="778"/>
        <end position="794"/>
    </location>
</feature>
<feature type="helix" evidence="57">
    <location>
        <begin position="798"/>
        <end position="800"/>
    </location>
</feature>
<feature type="strand" evidence="57">
    <location>
        <begin position="801"/>
        <end position="806"/>
    </location>
</feature>
<feature type="helix" evidence="57">
    <location>
        <begin position="808"/>
        <end position="819"/>
    </location>
</feature>
<feature type="helix" evidence="57">
    <location>
        <begin position="826"/>
        <end position="830"/>
    </location>
</feature>
<feature type="strand" evidence="57">
    <location>
        <begin position="832"/>
        <end position="836"/>
    </location>
</feature>
<feature type="turn" evidence="57">
    <location>
        <begin position="837"/>
        <end position="842"/>
    </location>
</feature>
<feature type="strand" evidence="57">
    <location>
        <begin position="845"/>
        <end position="851"/>
    </location>
</feature>
<feature type="strand" evidence="57">
    <location>
        <begin position="857"/>
        <end position="859"/>
    </location>
</feature>
<feature type="helix" evidence="57">
    <location>
        <begin position="862"/>
        <end position="865"/>
    </location>
</feature>
<feature type="helix" evidence="57">
    <location>
        <begin position="867"/>
        <end position="874"/>
    </location>
</feature>
<feature type="strand" evidence="57">
    <location>
        <begin position="875"/>
        <end position="885"/>
    </location>
</feature>
<feature type="helix" evidence="57">
    <location>
        <begin position="887"/>
        <end position="890"/>
    </location>
</feature>
<feature type="helix" evidence="57">
    <location>
        <begin position="894"/>
        <end position="905"/>
    </location>
</feature>
<feature type="strand" evidence="57">
    <location>
        <begin position="909"/>
        <end position="912"/>
    </location>
</feature>
<feature type="helix" evidence="57">
    <location>
        <begin position="914"/>
        <end position="916"/>
    </location>
</feature>
<protein>
    <recommendedName>
        <fullName evidence="41">Regulator of nonsense transcripts 1</fullName>
        <ecNumber evidence="4 33">3.6.4.12</ecNumber>
        <ecNumber evidence="40">3.6.4.13</ecNumber>
    </recommendedName>
    <alternativeName>
        <fullName evidence="1">ATP-dependent helicase RENT1</fullName>
    </alternativeName>
    <alternativeName>
        <fullName evidence="41">Nonsense mRNA reducing factor 1</fullName>
        <shortName evidence="41">NORF1</shortName>
    </alternativeName>
    <alternativeName>
        <fullName>Up-frameshift suppressor 1 homolog</fullName>
        <shortName>hUpf1</shortName>
    </alternativeName>
</protein>
<name>RENT1_HUMAN</name>
<comment type="function">
    <text evidence="1 7 9 11 14 18 20 22 25 26 27 28 33">RNA-dependent helicase required for nonsense-mediated decay (NMD) of aberrant mRNAs containing premature stop codons and modulates the expression level of normal mRNAs (PubMed:11163187, PubMed:16086026, PubMed:18172165, PubMed:21145460, PubMed:21419344, PubMed:24726324). Is recruited to mRNAs upon translation termination and undergoes a cycle of phosphorylation and dephosphorylation; its phosphorylation appears to be a key step in NMD (PubMed:11544179, PubMed:25220460). Recruited by release factors to stalled ribosomes together with the SMG1C protein kinase complex to form the transient SURF (SMG1-UPF1-eRF1-eRF3) complex (PubMed:19417104). In EJC-dependent NMD, the SURF complex associates with the exon junction complex (EJC) (located 50-55 or more nucleotides downstream from the termination codon) through UPF2 and allows the formation of an UPF1-UPF2-UPF3 surveillance complex which is believed to activate NMD (PubMed:21419344). Phosphorylated UPF1 is recognized by EST1B/SMG5, SMG6 and SMG7 which are thought to provide a link to the mRNA degradation machinery involving exonucleolytic and endonucleolytic pathways, and to serve as adapters to protein phosphatase 2A (PP2A), thereby triggering UPF1 dephosphorylation and allowing the recycling of NMD factors (PubMed:12554878). UPF1 can also activate NMD without UPF2 or UPF3, and in the absence of the NMD-enhancing downstream EJC indicative for alternative NMD pathways (PubMed:18447585). Plays a role in replication-dependent histone mRNA degradation at the end of phase S; the function is independent of UPF2 (PubMed:16086026, PubMed:18172165). For the recognition of premature termination codons (PTC) and initiation of NMD a competitive interaction between UPF1 and PABPC1 with the ribosome-bound release factors is proposed (PubMed:18447585, PubMed:25220460). The ATPase activity of UPF1 is required for disassembly of mRNPs undergoing NMD (PubMed:21145460). Together with UPF2 and dependent on TDRD6, mediates the degradation of mRNA harboring long 3'UTR by inducing the NMD machinery (By similarity). Also capable of unwinding double-stranded DNA and translocating on single-stranded DNA (PubMed:30218034).</text>
</comment>
<comment type="catalytic activity">
    <reaction evidence="33">
        <text>ATP + H2O = ADP + phosphate + H(+)</text>
        <dbReference type="Rhea" id="RHEA:13065"/>
        <dbReference type="ChEBI" id="CHEBI:15377"/>
        <dbReference type="ChEBI" id="CHEBI:15378"/>
        <dbReference type="ChEBI" id="CHEBI:30616"/>
        <dbReference type="ChEBI" id="CHEBI:43474"/>
        <dbReference type="ChEBI" id="CHEBI:456216"/>
        <dbReference type="EC" id="3.6.4.12"/>
    </reaction>
    <physiologicalReaction direction="left-to-right" evidence="33">
        <dbReference type="Rhea" id="RHEA:13066"/>
    </physiologicalReaction>
</comment>
<comment type="catalytic activity">
    <reaction evidence="40">
        <text>ATP + H2O = ADP + phosphate + H(+)</text>
        <dbReference type="Rhea" id="RHEA:13065"/>
        <dbReference type="ChEBI" id="CHEBI:15377"/>
        <dbReference type="ChEBI" id="CHEBI:15378"/>
        <dbReference type="ChEBI" id="CHEBI:30616"/>
        <dbReference type="ChEBI" id="CHEBI:43474"/>
        <dbReference type="ChEBI" id="CHEBI:456216"/>
        <dbReference type="EC" id="3.6.4.13"/>
    </reaction>
    <physiologicalReaction direction="left-to-right" evidence="40">
        <dbReference type="Rhea" id="RHEA:13066"/>
    </physiologicalReaction>
</comment>
<comment type="subunit">
    <text evidence="1 5 6 7 10 11 13 14 15 17 19 20 21 22 23 24 26 27 28 29 30 31">Found in a post-splicing messenger ribonucleoprotein (mRNP) complex (PubMed:21419344). Associates with the exon junction complex (EJC) (PubMed:11546874, PubMed:16452507). Associates with the SGM1C complex; is phosphorylated by the complex kinase component SGM1 (PubMed:19417104). Part of a complex composed of SMG1, DHX34 and UPF1; within the complex DHX34 acts as a scaffolding protein to facilitate SMG1 phosphorylation of UPF1 (PubMed:26841701). Interacts with UPF2 (PubMed:11073994, PubMed:11113196, PubMed:11163187, PubMed:19556969). Interacts with UPF3A and UPF3B (PubMed:11163187). Interacts with EST1A (PubMed:12554878). Interacts with SLBP (PubMed:16086026). Interacts (when hyperphosphorylated) with PNRC2 (PubMed:19150429). Interacts with AGO1 and AGO2 (PubMed:17932509). Interacts with GSPT2 (PubMed:18447585). Interacts with isoform 1 and isoform 5 of ADAR/ADAR1 (PubMed:18362360). Interacts with SMG7 (PubMed:15721257). Interacts with ZC3H12A; this interaction occurs in a mRNA translationally active- and termination-dependent manner and is essential for ZC3H12A-mediated degradation of target mRNAs (PubMed:26000482). Interacts with CPSF6 (PubMed:19864460). Interacts with MOV10; the interaction is direct and RNA-dependent (PubMed:24726324). Interacts with SHFL; the interaction increases in the presence of RNA (PubMed:27974568). Interacts with UPF2 and DDX4; interactions are mediated by TDRD6 (PubMed:25220460). Interacts with DHX34 and PABPC1/PABP1; the interactions are RNA-independent (PubMed:25220460). Interacts with RBM46 (By similarity).</text>
</comment>
<comment type="subunit">
    <text evidence="32">(Microbial infection) Interacts with human T-cell leukemia virus 1/HTLV-1 protein Tax; this interaction inhibits the host nonsense-mediated mRNA decay (NMD).</text>
</comment>
<comment type="interaction">
    <interactant intactId="EBI-373471">
        <id>Q92900</id>
    </interactant>
    <interactant intactId="EBI-717666">
        <id>Q96AP0</id>
        <label>ACD</label>
    </interactant>
    <organismsDiffer>false</organismsDiffer>
    <experiments>3</experiments>
</comment>
<comment type="interaction">
    <interactant intactId="EBI-373471">
        <id>Q92900</id>
    </interactant>
    <interactant intactId="EBI-2462104">
        <id>P55265</id>
        <label>ADAR</label>
    </interactant>
    <organismsDiffer>false</organismsDiffer>
    <experiments>3</experiments>
</comment>
<comment type="interaction">
    <interactant intactId="EBI-373471">
        <id>Q92900</id>
    </interactant>
    <interactant intactId="EBI-374238">
        <id>Q9NPI6</id>
        <label>DCP1A</label>
    </interactant>
    <organismsDiffer>false</organismsDiffer>
    <experiments>13</experiments>
</comment>
<comment type="interaction">
    <interactant intactId="EBI-373471">
        <id>Q92900</id>
    </interactant>
    <interactant intactId="EBI-521577">
        <id>Q8IU60</id>
        <label>DCP2</label>
    </interactant>
    <organismsDiffer>false</organismsDiffer>
    <experiments>3</experiments>
</comment>
<comment type="interaction">
    <interactant intactId="EBI-373471">
        <id>Q92900</id>
    </interactant>
    <interactant intactId="EBI-1171960">
        <id>Q9NZB2</id>
        <label>FAM120A</label>
    </interactant>
    <organismsDiffer>false</organismsDiffer>
    <experiments>3</experiments>
</comment>
<comment type="interaction">
    <interactant intactId="EBI-373471">
        <id>Q92900</id>
    </interactant>
    <interactant intactId="EBI-948993">
        <id>P15170</id>
        <label>GSPT1</label>
    </interactant>
    <organismsDiffer>false</organismsDiffer>
    <experiments>3</experiments>
</comment>
<comment type="interaction">
    <interactant intactId="EBI-373471">
        <id>Q92900</id>
    </interactant>
    <interactant intactId="EBI-3869637">
        <id>Q8IYD1</id>
        <label>GSPT2</label>
    </interactant>
    <organismsDiffer>false</organismsDiffer>
    <experiments>4</experiments>
</comment>
<comment type="interaction">
    <interactant intactId="EBI-373471">
        <id>Q92900</id>
    </interactant>
    <interactant intactId="EBI-722458">
        <id>Q9UN81</id>
        <label>L1RE1</label>
    </interactant>
    <organismsDiffer>false</organismsDiffer>
    <experiments>6</experiments>
</comment>
<comment type="interaction">
    <interactant intactId="EBI-373471">
        <id>Q92900</id>
    </interactant>
    <interactant intactId="EBI-726549">
        <id>Q9NPJ4</id>
        <label>PNRC2</label>
    </interactant>
    <organismsDiffer>false</organismsDiffer>
    <experiments>9</experiments>
</comment>
<comment type="interaction">
    <interactant intactId="EBI-373471">
        <id>Q92900</id>
    </interactant>
    <interactant intactId="EBI-2696402">
        <id>Q14493</id>
        <label>SLBP</label>
    </interactant>
    <organismsDiffer>false</organismsDiffer>
    <experiments>3</experiments>
</comment>
<comment type="interaction">
    <interactant intactId="EBI-373471">
        <id>Q92900</id>
    </interactant>
    <interactant intactId="EBI-719830">
        <id>Q92540</id>
        <label>SMG7</label>
    </interactant>
    <organismsDiffer>false</organismsDiffer>
    <experiments>4</experiments>
</comment>
<comment type="interaction">
    <interactant intactId="EBI-373471">
        <id>Q92900</id>
    </interactant>
    <interactant intactId="EBI-358174">
        <id>O95793</id>
        <label>STAU1</label>
    </interactant>
    <organismsDiffer>false</organismsDiffer>
    <experiments>6</experiments>
</comment>
<comment type="interaction">
    <interactant intactId="EBI-373471">
        <id>Q92900</id>
    </interactant>
    <interactant intactId="EBI-1772203">
        <id>O14746</id>
        <label>TERT</label>
    </interactant>
    <organismsDiffer>false</organismsDiffer>
    <experiments>3</experiments>
</comment>
<comment type="interaction">
    <interactant intactId="EBI-373471">
        <id>Q92900</id>
    </interactant>
    <interactant intactId="EBI-372073">
        <id>Q9HAU5</id>
        <label>UPF2</label>
    </interactant>
    <organismsDiffer>false</organismsDiffer>
    <experiments>30</experiments>
</comment>
<comment type="interaction">
    <interactant intactId="EBI-373471">
        <id>Q92900</id>
    </interactant>
    <interactant intactId="EBI-521530">
        <id>Q9H1J1</id>
        <label>UPF3A</label>
    </interactant>
    <organismsDiffer>false</organismsDiffer>
    <experiments>4</experiments>
</comment>
<comment type="interaction">
    <interactant intactId="EBI-373471">
        <id>Q92900</id>
    </interactant>
    <interactant intactId="EBI-372780">
        <id>Q9BZI7</id>
        <label>UPF3B</label>
    </interactant>
    <organismsDiffer>false</organismsDiffer>
    <experiments>11</experiments>
</comment>
<comment type="interaction">
    <interactant intactId="EBI-373471">
        <id>Q92900</id>
    </interactant>
    <interactant intactId="EBI-1389">
        <id>Q08491</id>
        <label>SKI7</label>
    </interactant>
    <organismsDiffer>true</organismsDiffer>
    <experiments>2</experiments>
</comment>
<comment type="interaction">
    <interactant intactId="EBI-373492">
        <id>Q92900-2</id>
    </interactant>
    <interactant intactId="EBI-366617">
        <id>Q14152</id>
        <label>EIF3A</label>
    </interactant>
    <organismsDiffer>false</organismsDiffer>
    <experiments>5</experiments>
</comment>
<comment type="interaction">
    <interactant intactId="EBI-373492">
        <id>Q92900-2</id>
    </interactant>
    <interactant intactId="EBI-3400861">
        <id>Q9UPR3</id>
        <label>SMG5</label>
    </interactant>
    <organismsDiffer>false</organismsDiffer>
    <experiments>2</experiments>
</comment>
<comment type="interaction">
    <interactant intactId="EBI-373492">
        <id>Q92900-2</id>
    </interactant>
    <interactant intactId="EBI-3232100">
        <id>Q86US8</id>
        <label>SMG6</label>
    </interactant>
    <organismsDiffer>false</organismsDiffer>
    <experiments>2</experiments>
</comment>
<comment type="interaction">
    <interactant intactId="EBI-373492">
        <id>Q92900-2</id>
    </interactant>
    <interactant intactId="EBI-372073">
        <id>Q9HAU5</id>
        <label>UPF2</label>
    </interactant>
    <organismsDiffer>false</organismsDiffer>
    <experiments>9</experiments>
</comment>
<comment type="subcellular location">
    <subcellularLocation>
        <location evidence="7">Cytoplasm</location>
    </subcellularLocation>
    <subcellularLocation>
        <location>Cytoplasm</location>
        <location>P-body</location>
    </subcellularLocation>
    <subcellularLocation>
        <location evidence="7 19">Nucleus</location>
    </subcellularLocation>
    <subcellularLocation>
        <location evidence="1">Cytoplasm</location>
        <location evidence="1">Perinuclear region</location>
    </subcellularLocation>
    <text evidence="1">Hyperphosphorylated form is targeted to the P-body, while unphosphorylated protein is distributed throughout the cytoplasm. Localized in the chromatoid bodies of round spermatids (By similarity).</text>
</comment>
<comment type="alternative products">
    <event type="alternative splicing"/>
    <isoform>
        <id>Q92900-1</id>
        <name>1</name>
        <sequence type="displayed"/>
    </isoform>
    <isoform>
        <id>Q92900-2</id>
        <name>2</name>
        <sequence type="described" ref="VSP_003393"/>
    </isoform>
</comment>
<comment type="tissue specificity">
    <text>Ubiquitous.</text>
</comment>
<comment type="domain">
    <text evidence="9">The [ST]-Q motif constitutes a recognition sequence for kinases from the PI3/PI4-kinase family.</text>
</comment>
<comment type="PTM">
    <text evidence="8 9 12 15 21">Phosphorylated by SMG1; required for formation of mRNA surveillance complexes.</text>
</comment>
<comment type="similarity">
    <text evidence="39">Belongs to the DNA2/NAM7 helicase family.</text>
</comment>
<comment type="sequence caution" evidence="39">
    <conflict type="erroneous initiation">
        <sequence resource="EMBL-CDS" id="BAA19664"/>
    </conflict>
    <text>Extended N-terminus.</text>
</comment>
<evidence type="ECO:0000250" key="1">
    <source>
        <dbReference type="UniProtKB" id="Q9EPU0"/>
    </source>
</evidence>
<evidence type="ECO:0000255" key="2">
    <source>
        <dbReference type="PROSITE-ProRule" id="PRU01341"/>
    </source>
</evidence>
<evidence type="ECO:0000256" key="3">
    <source>
        <dbReference type="SAM" id="MobiDB-lite"/>
    </source>
</evidence>
<evidence type="ECO:0000269" key="4">
    <source>
    </source>
</evidence>
<evidence type="ECO:0000269" key="5">
    <source>
    </source>
</evidence>
<evidence type="ECO:0000269" key="6">
    <source>
    </source>
</evidence>
<evidence type="ECO:0000269" key="7">
    <source>
    </source>
</evidence>
<evidence type="ECO:0000269" key="8">
    <source>
    </source>
</evidence>
<evidence type="ECO:0000269" key="9">
    <source>
    </source>
</evidence>
<evidence type="ECO:0000269" key="10">
    <source>
    </source>
</evidence>
<evidence type="ECO:0000269" key="11">
    <source>
    </source>
</evidence>
<evidence type="ECO:0000269" key="12">
    <source>
    </source>
</evidence>
<evidence type="ECO:0000269" key="13">
    <source>
    </source>
</evidence>
<evidence type="ECO:0000269" key="14">
    <source>
    </source>
</evidence>
<evidence type="ECO:0000269" key="15">
    <source>
    </source>
</evidence>
<evidence type="ECO:0000269" key="16">
    <source>
    </source>
</evidence>
<evidence type="ECO:0000269" key="17">
    <source>
    </source>
</evidence>
<evidence type="ECO:0000269" key="18">
    <source>
    </source>
</evidence>
<evidence type="ECO:0000269" key="19">
    <source>
    </source>
</evidence>
<evidence type="ECO:0000269" key="20">
    <source>
    </source>
</evidence>
<evidence type="ECO:0000269" key="21">
    <source>
    </source>
</evidence>
<evidence type="ECO:0000269" key="22">
    <source>
    </source>
</evidence>
<evidence type="ECO:0000269" key="23">
    <source>
    </source>
</evidence>
<evidence type="ECO:0000269" key="24">
    <source>
    </source>
</evidence>
<evidence type="ECO:0000269" key="25">
    <source>
    </source>
</evidence>
<evidence type="ECO:0000269" key="26">
    <source>
    </source>
</evidence>
<evidence type="ECO:0000269" key="27">
    <source>
    </source>
</evidence>
<evidence type="ECO:0000269" key="28">
    <source>
    </source>
</evidence>
<evidence type="ECO:0000269" key="29">
    <source>
    </source>
</evidence>
<evidence type="ECO:0000269" key="30">
    <source>
    </source>
</evidence>
<evidence type="ECO:0000269" key="31">
    <source>
    </source>
</evidence>
<evidence type="ECO:0000269" key="32">
    <source>
    </source>
</evidence>
<evidence type="ECO:0000269" key="33">
    <source>
    </source>
</evidence>
<evidence type="ECO:0000269" key="34">
    <source>
    </source>
</evidence>
<evidence type="ECO:0000303" key="35">
    <source>
    </source>
</evidence>
<evidence type="ECO:0000303" key="36">
    <source>
    </source>
</evidence>
<evidence type="ECO:0000303" key="37">
    <source>
    </source>
</evidence>
<evidence type="ECO:0000303" key="38">
    <source>
    </source>
</evidence>
<evidence type="ECO:0000305" key="39"/>
<evidence type="ECO:0000305" key="40">
    <source>
    </source>
</evidence>
<evidence type="ECO:0000312" key="41">
    <source>
        <dbReference type="HGNC" id="HGNC:9962"/>
    </source>
</evidence>
<evidence type="ECO:0007744" key="42">
    <source>
        <dbReference type="PDB" id="2GJK"/>
    </source>
</evidence>
<evidence type="ECO:0007744" key="43">
    <source>
    </source>
</evidence>
<evidence type="ECO:0007744" key="44">
    <source>
    </source>
</evidence>
<evidence type="ECO:0007744" key="45">
    <source>
    </source>
</evidence>
<evidence type="ECO:0007744" key="46">
    <source>
    </source>
</evidence>
<evidence type="ECO:0007744" key="47">
    <source>
    </source>
</evidence>
<evidence type="ECO:0007744" key="48">
    <source>
    </source>
</evidence>
<evidence type="ECO:0007744" key="49">
    <source>
    </source>
</evidence>
<evidence type="ECO:0007744" key="50">
    <source>
    </source>
</evidence>
<evidence type="ECO:0007829" key="51">
    <source>
        <dbReference type="PDB" id="2GJK"/>
    </source>
</evidence>
<evidence type="ECO:0007829" key="52">
    <source>
        <dbReference type="PDB" id="2GK6"/>
    </source>
</evidence>
<evidence type="ECO:0007829" key="53">
    <source>
        <dbReference type="PDB" id="2GK7"/>
    </source>
</evidence>
<evidence type="ECO:0007829" key="54">
    <source>
        <dbReference type="PDB" id="2IYK"/>
    </source>
</evidence>
<evidence type="ECO:0007829" key="55">
    <source>
        <dbReference type="PDB" id="2WJV"/>
    </source>
</evidence>
<evidence type="ECO:0007829" key="56">
    <source>
        <dbReference type="PDB" id="2WJY"/>
    </source>
</evidence>
<evidence type="ECO:0007829" key="57">
    <source>
        <dbReference type="PDB" id="2XZO"/>
    </source>
</evidence>
<evidence type="ECO:0007829" key="58">
    <source>
        <dbReference type="PDB" id="2XZP"/>
    </source>
</evidence>
<evidence type="ECO:0007829" key="59">
    <source>
        <dbReference type="PDB" id="6EJ5"/>
    </source>
</evidence>
<evidence type="ECO:0007829" key="60">
    <source>
        <dbReference type="PDB" id="8RXB"/>
    </source>
</evidence>
<organism>
    <name type="scientific">Homo sapiens</name>
    <name type="common">Human</name>
    <dbReference type="NCBI Taxonomy" id="9606"/>
    <lineage>
        <taxon>Eukaryota</taxon>
        <taxon>Metazoa</taxon>
        <taxon>Chordata</taxon>
        <taxon>Craniata</taxon>
        <taxon>Vertebrata</taxon>
        <taxon>Euteleostomi</taxon>
        <taxon>Mammalia</taxon>
        <taxon>Eutheria</taxon>
        <taxon>Euarchontoglires</taxon>
        <taxon>Primates</taxon>
        <taxon>Haplorrhini</taxon>
        <taxon>Catarrhini</taxon>
        <taxon>Hominidae</taxon>
        <taxon>Homo</taxon>
    </lineage>
</organism>
<proteinExistence type="evidence at protein level"/>
<keyword id="KW-0002">3D-structure</keyword>
<keyword id="KW-0025">Alternative splicing</keyword>
<keyword id="KW-0067">ATP-binding</keyword>
<keyword id="KW-0963">Cytoplasm</keyword>
<keyword id="KW-0347">Helicase</keyword>
<keyword id="KW-0945">Host-virus interaction</keyword>
<keyword id="KW-0378">Hydrolase</keyword>
<keyword id="KW-0479">Metal-binding</keyword>
<keyword id="KW-0488">Methylation</keyword>
<keyword id="KW-0866">Nonsense-mediated mRNA decay</keyword>
<keyword id="KW-0547">Nucleotide-binding</keyword>
<keyword id="KW-0539">Nucleus</keyword>
<keyword id="KW-0597">Phosphoprotein</keyword>
<keyword id="KW-1267">Proteomics identification</keyword>
<keyword id="KW-1185">Reference proteome</keyword>
<keyword id="KW-0677">Repeat</keyword>
<keyword id="KW-0694">RNA-binding</keyword>
<keyword id="KW-0862">Zinc</keyword>
<keyword id="KW-0863">Zinc-finger</keyword>
<reference key="1">
    <citation type="journal article" date="1996" name="Proc. Natl. Acad. Sci. U.S.A.">
        <title>Mammalian orthologues of a yeast regulator of nonsense transcript stability.</title>
        <authorList>
            <person name="Perlick H.A."/>
            <person name="Medghalchi S.M."/>
            <person name="Spencer F.A."/>
            <person name="Kendzior R.J. Jr."/>
            <person name="Dietz H.C."/>
        </authorList>
    </citation>
    <scope>NUCLEOTIDE SEQUENCE [MRNA] (ISOFORM 2)</scope>
    <source>
        <tissue>Heart</tissue>
    </source>
</reference>
<reference key="2">
    <citation type="journal article" date="1997" name="Nucleic Acids Res.">
        <title>Cloning and characterization of HUPF1, a human homolog of the Saccharomyces cerevisiae nonsense mRNA-reducing UPF1 protein.</title>
        <authorList>
            <person name="Applequist S.E."/>
            <person name="Selg M."/>
            <person name="Raman C."/>
            <person name="Jaeck H.-M."/>
        </authorList>
    </citation>
    <scope>NUCLEOTIDE SEQUENCE [MRNA] (ISOFORM 2)</scope>
    <scope>CHARACTERIZATION</scope>
</reference>
<reference key="3">
    <citation type="journal article" date="1996" name="DNA Res.">
        <title>Prediction of the coding sequences of unidentified human genes. VI. The coding sequences of 80 new genes (KIAA0201-KIAA0280) deduced by analysis of cDNA clones from cell line KG-1 and brain.</title>
        <authorList>
            <person name="Nagase T."/>
            <person name="Seki N."/>
            <person name="Ishikawa K."/>
            <person name="Ohira M."/>
            <person name="Kawarabayasi Y."/>
            <person name="Ohara O."/>
            <person name="Tanaka A."/>
            <person name="Kotani H."/>
            <person name="Miyajima N."/>
            <person name="Nomura N."/>
        </authorList>
    </citation>
    <scope>NUCLEOTIDE SEQUENCE [LARGE SCALE MRNA] (ISOFORM 1)</scope>
    <scope>VARIANT SER-69</scope>
    <source>
        <tissue>Bone marrow</tissue>
    </source>
</reference>
<reference key="4">
    <citation type="journal article" date="1999" name="Mol. Cell. Biol.">
        <title>SMG-2 is a phosphorylated protein required for mRNA surveillance in Caenorhabditis elegans and related to Upf1p of yeast.</title>
        <authorList>
            <person name="Page M.F."/>
            <person name="Carr B."/>
            <person name="Anders K.R."/>
            <person name="Grimson A."/>
            <person name="Anderson P."/>
        </authorList>
    </citation>
    <scope>NUCLEOTIDE SEQUENCE [MRNA] (ISOFORM 2)</scope>
</reference>
<reference key="5">
    <citation type="journal article" date="2004" name="Nature">
        <title>The DNA sequence and biology of human chromosome 19.</title>
        <authorList>
            <person name="Grimwood J."/>
            <person name="Gordon L.A."/>
            <person name="Olsen A.S."/>
            <person name="Terry A."/>
            <person name="Schmutz J."/>
            <person name="Lamerdin J.E."/>
            <person name="Hellsten U."/>
            <person name="Goodstein D."/>
            <person name="Couronne O."/>
            <person name="Tran-Gyamfi M."/>
            <person name="Aerts A."/>
            <person name="Altherr M."/>
            <person name="Ashworth L."/>
            <person name="Bajorek E."/>
            <person name="Black S."/>
            <person name="Branscomb E."/>
            <person name="Caenepeel S."/>
            <person name="Carrano A.V."/>
            <person name="Caoile C."/>
            <person name="Chan Y.M."/>
            <person name="Christensen M."/>
            <person name="Cleland C.A."/>
            <person name="Copeland A."/>
            <person name="Dalin E."/>
            <person name="Dehal P."/>
            <person name="Denys M."/>
            <person name="Detter J.C."/>
            <person name="Escobar J."/>
            <person name="Flowers D."/>
            <person name="Fotopulos D."/>
            <person name="Garcia C."/>
            <person name="Georgescu A.M."/>
            <person name="Glavina T."/>
            <person name="Gomez M."/>
            <person name="Gonzales E."/>
            <person name="Groza M."/>
            <person name="Hammon N."/>
            <person name="Hawkins T."/>
            <person name="Haydu L."/>
            <person name="Ho I."/>
            <person name="Huang W."/>
            <person name="Israni S."/>
            <person name="Jett J."/>
            <person name="Kadner K."/>
            <person name="Kimball H."/>
            <person name="Kobayashi A."/>
            <person name="Larionov V."/>
            <person name="Leem S.-H."/>
            <person name="Lopez F."/>
            <person name="Lou Y."/>
            <person name="Lowry S."/>
            <person name="Malfatti S."/>
            <person name="Martinez D."/>
            <person name="McCready P.M."/>
            <person name="Medina C."/>
            <person name="Morgan J."/>
            <person name="Nelson K."/>
            <person name="Nolan M."/>
            <person name="Ovcharenko I."/>
            <person name="Pitluck S."/>
            <person name="Pollard M."/>
            <person name="Popkie A.P."/>
            <person name="Predki P."/>
            <person name="Quan G."/>
            <person name="Ramirez L."/>
            <person name="Rash S."/>
            <person name="Retterer J."/>
            <person name="Rodriguez A."/>
            <person name="Rogers S."/>
            <person name="Salamov A."/>
            <person name="Salazar A."/>
            <person name="She X."/>
            <person name="Smith D."/>
            <person name="Slezak T."/>
            <person name="Solovyev V."/>
            <person name="Thayer N."/>
            <person name="Tice H."/>
            <person name="Tsai M."/>
            <person name="Ustaszewska A."/>
            <person name="Vo N."/>
            <person name="Wagner M."/>
            <person name="Wheeler J."/>
            <person name="Wu K."/>
            <person name="Xie G."/>
            <person name="Yang J."/>
            <person name="Dubchak I."/>
            <person name="Furey T.S."/>
            <person name="DeJong P."/>
            <person name="Dickson M."/>
            <person name="Gordon D."/>
            <person name="Eichler E.E."/>
            <person name="Pennacchio L.A."/>
            <person name="Richardson P."/>
            <person name="Stubbs L."/>
            <person name="Rokhsar D.S."/>
            <person name="Myers R.M."/>
            <person name="Rubin E.M."/>
            <person name="Lucas S.M."/>
        </authorList>
    </citation>
    <scope>NUCLEOTIDE SEQUENCE [LARGE SCALE GENOMIC DNA]</scope>
</reference>
<reference key="6">
    <citation type="journal article" date="2004" name="Genome Res.">
        <title>The status, quality, and expansion of the NIH full-length cDNA project: the Mammalian Gene Collection (MGC).</title>
        <authorList>
            <consortium name="The MGC Project Team"/>
        </authorList>
    </citation>
    <scope>NUCLEOTIDE SEQUENCE [LARGE SCALE MRNA] (ISOFORM 2)</scope>
    <source>
        <tissue>Uterus</tissue>
    </source>
</reference>
<reference key="7">
    <citation type="journal article" date="2000" name="Cell">
        <title>Human Upf proteins target an mRNA for nonsense-mediated decay when bound downstream of a termination codon.</title>
        <authorList>
            <person name="Lykke-Andersen J."/>
            <person name="Shu M.-D."/>
            <person name="Steitz J.A."/>
        </authorList>
    </citation>
    <scope>FUNCTION IN NONSENSE-MEDIATED MRNA DECAY</scope>
    <scope>INTERACTION WITH UPF2; UPF3A AND UPF3B</scope>
    <scope>SUBCELLULAR LOCATION</scope>
    <scope>MUTAGENESIS OF ARG-843</scope>
</reference>
<reference key="8">
    <citation type="journal article" date="2000" name="Mol. Cell. Biol.">
        <title>Novel Upf2p orthologues suggest a functional link between translation initiation and nonsense surveillance complexes.</title>
        <authorList>
            <person name="Mendell J.T."/>
            <person name="Medghalchi S.M."/>
            <person name="Lake R.G."/>
            <person name="Noensie E.N."/>
            <person name="Dietz H.C."/>
        </authorList>
    </citation>
    <scope>INTERACTION WITH UPF2</scope>
</reference>
<reference key="9">
    <citation type="journal article" date="2000" name="RNA">
        <title>Characterization of the biochemical properties of the human Upf1 gene product that is involved in nonsense-mediated mRNA decay.</title>
        <authorList>
            <person name="Bhattacharya A."/>
            <person name="Czaplinski K."/>
            <person name="Trifillis P."/>
            <person name="He F."/>
            <person name="Jacobson A."/>
            <person name="Peltz S.W."/>
        </authorList>
    </citation>
    <scope>FUNCTION</scope>
    <scope>ENZYME ACTIVITY</scope>
    <scope>CATALYTIC ACTIVITY</scope>
    <scope>RNA-BINDING</scope>
    <scope>MUTAGENESIS OF 647-ASP-GLU-648</scope>
</reference>
<reference key="10">
    <citation type="journal article" date="2001" name="Genes Dev.">
        <title>Human SMG-1, a novel phosphatidylinositol 3-kinase-related protein kinase, associates with components of the mRNA surveillance complex and is involved in the regulation of nonsense-mediated mRNA decay.</title>
        <authorList>
            <person name="Yamashita A."/>
            <person name="Ohnishi T."/>
            <person name="Kashima I."/>
            <person name="Taya Y."/>
            <person name="Ohno S."/>
        </authorList>
    </citation>
    <scope>FUNCTION</scope>
    <scope>PHOSPHORYLATION AT SER-1089 AND SER-1107</scope>
    <scope>MUTAGENESIS OF SER-1089; SER-1107 AND GLN-1108</scope>
</reference>
<reference key="11">
    <citation type="journal article" date="2001" name="J. Biol. Chem.">
        <title>Cloning of a novel phosphatidylinositol kinase-related kinase: characterization of the human SMG-1 RNA surveillance protein.</title>
        <authorList>
            <person name="Denning G."/>
            <person name="Jamieson L."/>
            <person name="Maquat L.E."/>
            <person name="Thompson E.A."/>
            <person name="Fields A.P."/>
        </authorList>
    </citation>
    <scope>PHOSPHORYLATION</scope>
</reference>
<reference key="12">
    <citation type="journal article" date="2001" name="Mol. Cell. Biol.">
        <title>Identification and characterization of human orthologues to Saccharomyces cerevisiae Upf2 protein and Upf3 protein (Caenorhabditis elegans SMG-4).</title>
        <authorList>
            <person name="Serin G."/>
            <person name="Gersappe A."/>
            <person name="Black J.D."/>
            <person name="Aronoff R."/>
            <person name="Maquat L.E."/>
        </authorList>
    </citation>
    <scope>INTERACTION WITH UPF2</scope>
    <scope>SUBCELLULAR LOCATION</scope>
</reference>
<reference key="13">
    <citation type="journal article" date="2001" name="Science">
        <title>Communication of the position of exon-exon junctions to the mRNA surveillance machinery by the protein RNPS1.</title>
        <authorList>
            <person name="Lykke-Andersen J."/>
            <person name="Shu M.-D."/>
            <person name="Steitz J.A."/>
        </authorList>
    </citation>
    <scope>IDENTIFICATION IN A POST-SPLICING MRNP COMPLEX</scope>
    <scope>ASSOCIATION WITH THE EJC COMPLEX</scope>
</reference>
<reference key="14">
    <citation type="journal article" date="2003" name="Mol. Cell">
        <title>Phosphorylation of hUPF1 induces formation of mRNA surveillance complexes containing hSMG-5 and hSMG-7.</title>
        <authorList>
            <person name="Ohnishi T."/>
            <person name="Yamashita A."/>
            <person name="Kashima I."/>
            <person name="Schell T."/>
            <person name="Anders K.R."/>
            <person name="Grimson A."/>
            <person name="Hachiya T."/>
            <person name="Hentze M.W."/>
            <person name="Anderson P."/>
            <person name="Ohno S."/>
        </authorList>
    </citation>
    <scope>PHOSPHORYLATION</scope>
</reference>
<reference key="15">
    <citation type="journal article" date="2003" name="RNA">
        <title>Characterization of human Smg5/7a: a protein with similarities to Caenorhabditis elegans SMG5 and SMG7 that functions in the dephosphorylation of Upf1.</title>
        <authorList>
            <person name="Chiu S.-Y."/>
            <person name="Serin G."/>
            <person name="Ohara O."/>
            <person name="Maquat L.E."/>
        </authorList>
    </citation>
    <scope>FUNCTION</scope>
    <scope>INTERACTION WITH EST1A</scope>
</reference>
<reference key="16">
    <citation type="journal article" date="2005" name="Mol. Cell">
        <title>SMG7 is a 14-3-3-like adaptor in the nonsense-mediated mRNA decay pathway.</title>
        <authorList>
            <person name="Fukuhara N."/>
            <person name="Ebert J."/>
            <person name="Unterholzner L."/>
            <person name="Lindner D."/>
            <person name="Izaurralde E."/>
            <person name="Conti E."/>
        </authorList>
    </citation>
    <scope>INTERACTION WITH SMG7</scope>
</reference>
<reference key="17">
    <citation type="journal article" date="2005" name="Nat. Struct. Mol. Biol.">
        <title>Regulated degradation of replication-dependent histone mRNAs requires both ATR and Upf1.</title>
        <authorList>
            <person name="Kaygun H."/>
            <person name="Marzluff W.F."/>
        </authorList>
    </citation>
    <scope>FUNCTION</scope>
    <scope>INTERACTION WITH SLBP</scope>
    <scope>MUTAGENESIS OF LYS-509 AND ARG-843</scope>
</reference>
<reference key="18">
    <citation type="journal article" date="2006" name="Cell">
        <title>Global, in vivo, and site-specific phosphorylation dynamics in signaling networks.</title>
        <authorList>
            <person name="Olsen J.V."/>
            <person name="Blagoev B."/>
            <person name="Gnad F."/>
            <person name="Macek B."/>
            <person name="Kumar C."/>
            <person name="Mortensen P."/>
            <person name="Mann M."/>
        </authorList>
    </citation>
    <scope>IDENTIFICATION BY MASS SPECTROMETRY [LARGE SCALE ANALYSIS]</scope>
    <source>
        <tissue>Cervix carcinoma</tissue>
    </source>
</reference>
<reference key="19">
    <citation type="journal article" date="2006" name="Genes Dev.">
        <title>Binding of a novel SMG-1-Upf1-eRF1-eRF3 complex (SURF) to the exon junction complex triggers Upf1 phosphorylation and nonsense-mediated mRNA decay.</title>
        <authorList>
            <person name="Kashima I."/>
            <person name="Yamashita A."/>
            <person name="Izumi N."/>
            <person name="Kataoka N."/>
            <person name="Morishita R."/>
            <person name="Hoshino S."/>
            <person name="Ohno M."/>
            <person name="Dreyfuss G."/>
            <person name="Ohno S."/>
        </authorList>
    </citation>
    <scope>IDENTIFICATION IN THE SURF COMPLEX</scope>
    <scope>PHOSPHORYLATION AT SER-1089 AND SER-1107</scope>
    <scope>MUTAGENESIS OF CYS-126; LYS-509; SER-1084; SER-1089; SER-1107 AND SER-1127</scope>
</reference>
<reference key="20">
    <citation type="journal article" date="2007" name="EMBO Rep.">
        <title>Proteomic and functional analysis of Argonaute-containing mRNA-protein complexes in human cells.</title>
        <authorList>
            <person name="Hoeck J."/>
            <person name="Weinmann L."/>
            <person name="Ender C."/>
            <person name="Ruedel S."/>
            <person name="Kremmer E."/>
            <person name="Raabe M."/>
            <person name="Urlaub H."/>
            <person name="Meister G."/>
        </authorList>
    </citation>
    <scope>INTERACTION WITH AGO1 AND AGO2</scope>
</reference>
<reference key="21">
    <citation type="journal article" date="2007" name="Science">
        <title>ATM and ATR substrate analysis reveals extensive protein networks responsive to DNA damage.</title>
        <authorList>
            <person name="Matsuoka S."/>
            <person name="Ballif B.A."/>
            <person name="Smogorzewska A."/>
            <person name="McDonald E.R. III"/>
            <person name="Hurov K.E."/>
            <person name="Luo J."/>
            <person name="Bakalarski C.E."/>
            <person name="Zhao Z."/>
            <person name="Solimini N."/>
            <person name="Lerenthal Y."/>
            <person name="Shiloh Y."/>
            <person name="Gygi S.P."/>
            <person name="Elledge S.J."/>
        </authorList>
    </citation>
    <scope>PHOSPHORYLATION [LARGE SCALE ANALYSIS] AT SER-1107</scope>
    <scope>IDENTIFICATION BY MASS SPECTROMETRY [LARGE SCALE ANALYSIS]</scope>
    <source>
        <tissue>Embryonic kidney</tissue>
    </source>
</reference>
<reference key="22">
    <citation type="journal article" date="2008" name="Genes Dev.">
        <title>Degradation of histone mRNA requires oligouridylation followed by decapping and simultaneous degradation of the mRNA both 5' to 3' and 3' to 5'.</title>
        <authorList>
            <person name="Mullen T.E."/>
            <person name="Marzluff W.F."/>
        </authorList>
    </citation>
    <scope>FUNCTION IN HISTONE MRNA DEGRADATION ACTIVITY</scope>
</reference>
<reference key="23">
    <citation type="journal article" date="2008" name="PLoS Biol.">
        <title>A competition between stimulators and antagonists of Upf complex recruitment governs human nonsense-mediated mRNA decay.</title>
        <authorList>
            <person name="Singh G."/>
            <person name="Rebbapragada I."/>
            <person name="Lykke-Andersen J."/>
        </authorList>
    </citation>
    <scope>FUNCTION</scope>
    <scope>INTERACTION WITH GSPT2</scope>
</reference>
<reference key="24">
    <citation type="journal article" date="2008" name="Proc. Natl. Acad. Sci. U.S.A.">
        <title>A quantitative atlas of mitotic phosphorylation.</title>
        <authorList>
            <person name="Dephoure N."/>
            <person name="Zhou C."/>
            <person name="Villen J."/>
            <person name="Beausoleil S.A."/>
            <person name="Bakalarski C.E."/>
            <person name="Elledge S.J."/>
            <person name="Gygi S.P."/>
        </authorList>
    </citation>
    <scope>PHOSPHORYLATION [LARGE SCALE ANALYSIS] AT SER-1107</scope>
    <scope>IDENTIFICATION BY MASS SPECTROMETRY [LARGE SCALE ANALYSIS]</scope>
    <source>
        <tissue>Cervix carcinoma</tissue>
    </source>
</reference>
<reference key="25">
    <citation type="journal article" date="2008" name="Proc. Natl. Acad. Sci. U.S.A.">
        <title>The editing enzyme ADAR1 and the mRNA surveillance protein hUpf1 interact in the cell nucleus.</title>
        <authorList>
            <person name="Agranat L."/>
            <person name="Raitskin O."/>
            <person name="Sperling J."/>
            <person name="Sperling R."/>
        </authorList>
    </citation>
    <scope>INTERACTION WITH ADAR</scope>
    <scope>SUBCELLULAR LOCATION</scope>
</reference>
<reference key="26">
    <citation type="journal article" date="2009" name="Anal. Chem.">
        <title>Lys-N and trypsin cover complementary parts of the phosphoproteome in a refined SCX-based approach.</title>
        <authorList>
            <person name="Gauci S."/>
            <person name="Helbig A.O."/>
            <person name="Slijper M."/>
            <person name="Krijgsveld J."/>
            <person name="Heck A.J."/>
            <person name="Mohammed S."/>
        </authorList>
    </citation>
    <scope>IDENTIFICATION BY MASS SPECTROMETRY [LARGE SCALE ANALYSIS]</scope>
</reference>
<reference key="27">
    <citation type="journal article" date="2009" name="Genes Dev.">
        <title>SMG-8 and SMG-9, two novel subunits of the SMG-1 complex, regulate remodeling of the mRNA surveillance complex during nonsense-mediated mRNA decay.</title>
        <authorList>
            <person name="Yamashita A."/>
            <person name="Izumi N."/>
            <person name="Kashima I."/>
            <person name="Ohnishi T."/>
            <person name="Saari B."/>
            <person name="Katsuhata Y."/>
            <person name="Muramatsu R."/>
            <person name="Morita T."/>
            <person name="Iwamatsu A."/>
            <person name="Hachiya T."/>
            <person name="Kurata R."/>
            <person name="Hirano H."/>
            <person name="Anderson P."/>
            <person name="Ohno S."/>
        </authorList>
    </citation>
    <scope>FUNCTION</scope>
    <scope>ASSOCIATION WITH THE SMG1C COMPLEX</scope>
    <scope>MUTAGENESIS OF CYS-126</scope>
</reference>
<reference key="28">
    <citation type="journal article" date="2009" name="Mol. Biol. Cell">
        <title>Mammalian pre-mRNA 3' end processing factor CF I m 68 functions in mRNA export.</title>
        <authorList>
            <person name="Ruepp M.D."/>
            <person name="Aringhieri C."/>
            <person name="Vivarelli S."/>
            <person name="Cardinale S."/>
            <person name="Paro S."/>
            <person name="Schuemperli D."/>
            <person name="Barabino S.M."/>
        </authorList>
    </citation>
    <scope>INTERACTION WITH CPSF6</scope>
</reference>
<reference key="29">
    <citation type="journal article" date="2009" name="Mol. Cell">
        <title>Human proline-rich nuclear receptor coregulatory protein 2 mediates an interaction between mRNA surveillance machinery and decapping complex.</title>
        <authorList>
            <person name="Cho H."/>
            <person name="Kim K.M."/>
            <person name="Kim Y.K."/>
        </authorList>
    </citation>
    <scope>SUBCELLULAR LOCATION</scope>
    <scope>PHOSPHORYLATION</scope>
    <scope>INTERACTION WITH PNRC2</scope>
    <scope>MUTAGENESIS OF 506-GLY--GLY-508</scope>
</reference>
<reference key="30">
    <citation type="journal article" date="2009" name="Sci. Signal.">
        <title>Quantitative phosphoproteomic analysis of T cell receptor signaling reveals system-wide modulation of protein-protein interactions.</title>
        <authorList>
            <person name="Mayya V."/>
            <person name="Lundgren D.H."/>
            <person name="Hwang S.-I."/>
            <person name="Rezaul K."/>
            <person name="Wu L."/>
            <person name="Eng J.K."/>
            <person name="Rodionov V."/>
            <person name="Han D.K."/>
        </authorList>
    </citation>
    <scope>PHOSPHORYLATION [LARGE SCALE ANALYSIS] AT SER-1107</scope>
    <scope>IDENTIFICATION BY MASS SPECTROMETRY [LARGE SCALE ANALYSIS]</scope>
    <source>
        <tissue>Leukemic T-cell</tissue>
    </source>
</reference>
<reference key="31">
    <citation type="journal article" date="2010" name="Cell">
        <title>Upf1 ATPase-dependent mRNP disassembly is required for completion of nonsense- mediated mRNA decay.</title>
        <authorList>
            <person name="Franks T.M."/>
            <person name="Singh G."/>
            <person name="Lykke-Andersen J."/>
        </authorList>
    </citation>
    <scope>FUNCTION IN MRNP DISASSEMBLY</scope>
</reference>
<reference key="32">
    <citation type="journal article" date="2010" name="Sci. Signal.">
        <title>Quantitative phosphoproteomics reveals widespread full phosphorylation site occupancy during mitosis.</title>
        <authorList>
            <person name="Olsen J.V."/>
            <person name="Vermeulen M."/>
            <person name="Santamaria A."/>
            <person name="Kumar C."/>
            <person name="Miller M.L."/>
            <person name="Jensen L.J."/>
            <person name="Gnad F."/>
            <person name="Cox J."/>
            <person name="Jensen T.S."/>
            <person name="Nigg E.A."/>
            <person name="Brunak S."/>
            <person name="Mann M."/>
        </authorList>
    </citation>
    <scope>PHOSPHORYLATION [LARGE SCALE ANALYSIS] AT SER-1107; SER-1110 AND SER-1127</scope>
    <scope>IDENTIFICATION BY MASS SPECTROMETRY [LARGE SCALE ANALYSIS]</scope>
    <source>
        <tissue>Cervix carcinoma</tissue>
    </source>
</reference>
<reference key="33">
    <citation type="journal article" date="2011" name="BMC Syst. Biol.">
        <title>Initial characterization of the human central proteome.</title>
        <authorList>
            <person name="Burkard T.R."/>
            <person name="Planyavsky M."/>
            <person name="Kaupe I."/>
            <person name="Breitwieser F.P."/>
            <person name="Buerckstuemmer T."/>
            <person name="Bennett K.L."/>
            <person name="Superti-Furga G."/>
            <person name="Colinge J."/>
        </authorList>
    </citation>
    <scope>IDENTIFICATION BY MASS SPECTROMETRY [LARGE SCALE ANALYSIS]</scope>
</reference>
<reference key="34">
    <citation type="journal article" date="2011" name="Sci. Signal.">
        <title>System-wide temporal characterization of the proteome and phosphoproteome of human embryonic stem cell differentiation.</title>
        <authorList>
            <person name="Rigbolt K.T."/>
            <person name="Prokhorova T.A."/>
            <person name="Akimov V."/>
            <person name="Henningsen J."/>
            <person name="Johansen P.T."/>
            <person name="Kratchmarova I."/>
            <person name="Kassem M."/>
            <person name="Mann M."/>
            <person name="Olsen J.V."/>
            <person name="Blagoev B."/>
        </authorList>
    </citation>
    <scope>PHOSPHORYLATION [LARGE SCALE ANALYSIS] AT SER-1107 AND SER-1110</scope>
    <scope>IDENTIFICATION BY MASS SPECTROMETRY [LARGE SCALE ANALYSIS]</scope>
</reference>
<reference key="35">
    <citation type="journal article" date="2013" name="J. Proteome Res.">
        <title>Toward a comprehensive characterization of a human cancer cell phosphoproteome.</title>
        <authorList>
            <person name="Zhou H."/>
            <person name="Di Palma S."/>
            <person name="Preisinger C."/>
            <person name="Peng M."/>
            <person name="Polat A.N."/>
            <person name="Heck A.J."/>
            <person name="Mohammed S."/>
        </authorList>
    </citation>
    <scope>PHOSPHORYLATION [LARGE SCALE ANALYSIS] AT SER-565; SER-956 AND SER-1107</scope>
    <scope>IDENTIFICATION BY MASS SPECTROMETRY [LARGE SCALE ANALYSIS]</scope>
    <source>
        <tissue>Cervix carcinoma</tissue>
        <tissue>Erythroleukemia</tissue>
    </source>
</reference>
<reference key="36">
    <citation type="journal article" date="2014" name="Cell Rep.">
        <title>The RNA helicase DHX34 activates NMD by promoting a transition from the surveillance to the decay-inducing complex.</title>
        <authorList>
            <person name="Hug N."/>
            <person name="Caceres J.F."/>
        </authorList>
    </citation>
    <scope>FUNCTION</scope>
    <scope>INTERACTION WITH DHX34; PABPC1 AND UPF2</scope>
    <scope>MUTAGENESIS OF CYS-126; 181-LEU--TYR-184; 204-VAL--VAL-205; GLY-506; GLY-508 AND LYS-509</scope>
</reference>
<reference key="37">
    <citation type="journal article" date="2014" name="J. Proteomics">
        <title>An enzyme assisted RP-RPLC approach for in-depth analysis of human liver phosphoproteome.</title>
        <authorList>
            <person name="Bian Y."/>
            <person name="Song C."/>
            <person name="Cheng K."/>
            <person name="Dong M."/>
            <person name="Wang F."/>
            <person name="Huang J."/>
            <person name="Sun D."/>
            <person name="Wang L."/>
            <person name="Ye M."/>
            <person name="Zou H."/>
        </authorList>
    </citation>
    <scope>PHOSPHORYLATION [LARGE SCALE ANALYSIS] AT SER-10 AND SER-31</scope>
    <scope>IDENTIFICATION BY MASS SPECTROMETRY [LARGE SCALE ANALYSIS]</scope>
    <source>
        <tissue>Liver</tissue>
    </source>
</reference>
<reference key="38">
    <citation type="journal article" date="2014" name="Mol. Cell">
        <title>MOV10 Is a 5' to 3' RNA helicase contributing to UPF1 mRNA target degradation by translocation along 3' UTRs.</title>
        <authorList>
            <person name="Gregersen L.H."/>
            <person name="Schueler M."/>
            <person name="Munschauer M."/>
            <person name="Mastrobuoni G."/>
            <person name="Chen W."/>
            <person name="Kempa S."/>
            <person name="Dieterich C."/>
            <person name="Landthaler M."/>
        </authorList>
    </citation>
    <scope>FUNCTION</scope>
    <scope>INTERACTION WITH MOV10</scope>
</reference>
<reference key="39">
    <citation type="journal article" date="2014" name="Mol. Cell. Proteomics">
        <title>Immunoaffinity enrichment and mass spectrometry analysis of protein methylation.</title>
        <authorList>
            <person name="Guo A."/>
            <person name="Gu H."/>
            <person name="Zhou J."/>
            <person name="Mulhern D."/>
            <person name="Wang Y."/>
            <person name="Lee K.A."/>
            <person name="Yang V."/>
            <person name="Aguiar M."/>
            <person name="Kornhauser J."/>
            <person name="Jia X."/>
            <person name="Ren J."/>
            <person name="Beausoleil S.A."/>
            <person name="Silva J.C."/>
            <person name="Vemulapalli V."/>
            <person name="Bedford M.T."/>
            <person name="Comb M.J."/>
        </authorList>
    </citation>
    <scope>METHYLATION [LARGE SCALE ANALYSIS] AT ARG-1019</scope>
    <scope>IDENTIFICATION BY MASS SPECTROMETRY [LARGE SCALE ANALYSIS]</scope>
    <source>
        <tissue>Colon carcinoma</tissue>
    </source>
</reference>
<reference key="40">
    <citation type="journal article" date="2015" name="Cell">
        <title>Regnase-1 and Roquin regulate a common element in inflammatory mRNAs by spatiotemporally distinct mechanisms.</title>
        <authorList>
            <person name="Mino T."/>
            <person name="Murakawa Y."/>
            <person name="Fukao A."/>
            <person name="Vandenbon A."/>
            <person name="Wessels H.H."/>
            <person name="Ori D."/>
            <person name="Uehata T."/>
            <person name="Tartey S."/>
            <person name="Akira S."/>
            <person name="Suzuki Y."/>
            <person name="Vinuesa C.G."/>
            <person name="Ohler U."/>
            <person name="Standley D.M."/>
            <person name="Landthaler M."/>
            <person name="Fujiwara T."/>
            <person name="Takeuchi O."/>
        </authorList>
    </citation>
    <scope>INTERACTION WITH ZC3H12A</scope>
    <scope>MUTAGENESIS OF 647-ASP-GLU-648</scope>
</reference>
<reference key="41">
    <citation type="journal article" date="2016" name="Nat. Commun.">
        <title>The RNA helicase DHX34 functions as a scaffold for SMG1-mediated UPF1 phosphorylation.</title>
        <authorList>
            <person name="Melero R."/>
            <person name="Hug N."/>
            <person name="Lopez-Perrote A."/>
            <person name="Yamashita A."/>
            <person name="Caceres J.F."/>
            <person name="Llorca O."/>
        </authorList>
    </citation>
    <scope>IDENTIFICATION IN A COMPLEX WITH DHX34 AND SMG1</scope>
    <scope>INTERACTION WITH DHX34 AND SMG1</scope>
    <scope>MUTAGENESIS OF CYS-126</scope>
</reference>
<reference key="42">
    <citation type="journal article" date="2017" name="J. Virol.">
        <title>IRAV (FLJ11286), an Interferon-Stimulated Gene with Antiviral Activity against Dengue Virus, Interacts with MOV10.</title>
        <authorList>
            <person name="Balinsky C.A."/>
            <person name="Schmeisser H."/>
            <person name="Wells A.I."/>
            <person name="Ganesan S."/>
            <person name="Jin T."/>
            <person name="Singh K."/>
            <person name="Zoon K.C."/>
        </authorList>
    </citation>
    <scope>INTERACTION WITH SHFL</scope>
</reference>
<reference key="43">
    <citation type="journal article" date="2018" name="Nat. Commun.">
        <title>HTLV-1 Tax plugs and freezes UPF1 helicase leading to nonsense-mediated mRNA decay inhibition.</title>
        <authorList>
            <person name="Fiorini F."/>
            <person name="Robin J.P."/>
            <person name="Kanaan J."/>
            <person name="Borowiak M."/>
            <person name="Croquette V."/>
            <person name="Le Hir H."/>
            <person name="Jalinot P."/>
            <person name="Mocquet V."/>
        </authorList>
    </citation>
    <scope>INTERACTION WITH HUMAN T-CELL LEUKEMIA VIRUS 1/HTLV-1 PROTEIN TAX</scope>
</reference>
<reference key="44">
    <citation type="journal article" date="2018" name="Nat. Commun.">
        <title>UPF1-like helicase grip on nucleic acids dictates processivity.</title>
        <authorList>
            <person name="Kanaan J."/>
            <person name="Raj S."/>
            <person name="Decourty L."/>
            <person name="Saveanu C."/>
            <person name="Croquette V."/>
            <person name="Le Hir H."/>
        </authorList>
    </citation>
    <scope>FUNCTION</scope>
    <scope>CATALYTIC ACTIVITY</scope>
</reference>
<reference key="45">
    <citation type="journal article" date="2007" name="EMBO J.">
        <title>Structural and functional insights into the human Upf1 helicase core.</title>
        <authorList>
            <person name="Cheng Z."/>
            <person name="Muhlrad D."/>
            <person name="Lim M.K."/>
            <person name="Parker R."/>
            <person name="Song H."/>
        </authorList>
    </citation>
    <scope>X-RAY CRYSTALLOGRAPHY (2.6 ANGSTROMS) OF 295-914</scope>
    <scope>MUTAGENESIS OF LYS-509; 610-LYS--ARG-612; ARG-615; 647-ASP-GLU-648; GLN-676; ARG-714 AND ARG-876</scope>
</reference>
<reference key="46">
    <citation type="journal article" date="2009" name="EMBO J.">
        <title>Unusual bipartite mode of interaction between the nonsense-mediated decay factors, UPF1 and UPF2.</title>
        <authorList>
            <person name="Clerici M."/>
            <person name="Mourao A."/>
            <person name="Gutsche I."/>
            <person name="Gehring N.H."/>
            <person name="Hentze M.W."/>
            <person name="Kulozik A."/>
            <person name="Kadlec J."/>
            <person name="Sattler M."/>
            <person name="Cusack S."/>
        </authorList>
    </citation>
    <scope>X-RAY CRYSTALLOGRAPHY (2.5 ANGSTROMS) OF 115-914 IN COMPLEX WITH UPF2</scope>
</reference>
<reference key="47">
    <citation type="journal article" date="2011" name="Mol. Cell">
        <title>Molecular mechanisms for the RNA-dependent ATPase activity of Upf1 and its regulation by Upf2.</title>
        <authorList>
            <person name="Chakrabarti S."/>
            <person name="Jayachandran U."/>
            <person name="Bonneau F."/>
            <person name="Fiorini F."/>
            <person name="Basquin C."/>
            <person name="Domcke S."/>
            <person name="Le Hir H."/>
            <person name="Conti E."/>
        </authorList>
    </citation>
    <scope>X-RAY CRYSTALLOGRAPHY (2.4 ANGSTROMS) OF 295-925 IN COMPLEX WITH ATP ANALOG AND RNA</scope>
    <scope>FUNCTION</scope>
</reference>